<evidence type="ECO:0000250" key="1">
    <source>
        <dbReference type="UniProtKB" id="A0A8C0TYJ0"/>
    </source>
</evidence>
<evidence type="ECO:0000250" key="2">
    <source>
        <dbReference type="UniProtKB" id="Q62696"/>
    </source>
</evidence>
<evidence type="ECO:0000250" key="3">
    <source>
        <dbReference type="UniProtKB" id="Q811D0"/>
    </source>
</evidence>
<evidence type="ECO:0000255" key="4">
    <source>
        <dbReference type="PROSITE-ProRule" id="PRU00100"/>
    </source>
</evidence>
<evidence type="ECO:0000255" key="5">
    <source>
        <dbReference type="PROSITE-ProRule" id="PRU00143"/>
    </source>
</evidence>
<evidence type="ECO:0000255" key="6">
    <source>
        <dbReference type="PROSITE-ProRule" id="PRU00192"/>
    </source>
</evidence>
<evidence type="ECO:0000255" key="7">
    <source>
        <dbReference type="PROSITE-ProRule" id="PRU00365"/>
    </source>
</evidence>
<evidence type="ECO:0000256" key="8">
    <source>
        <dbReference type="SAM" id="MobiDB-lite"/>
    </source>
</evidence>
<evidence type="ECO:0000269" key="9">
    <source>
    </source>
</evidence>
<evidence type="ECO:0000269" key="10">
    <source>
    </source>
</evidence>
<evidence type="ECO:0000269" key="11">
    <source>
    </source>
</evidence>
<evidence type="ECO:0000269" key="12">
    <source>
    </source>
</evidence>
<evidence type="ECO:0000269" key="13">
    <source>
    </source>
</evidence>
<evidence type="ECO:0000269" key="14">
    <source>
    </source>
</evidence>
<evidence type="ECO:0000269" key="15">
    <source>
    </source>
</evidence>
<evidence type="ECO:0000269" key="16">
    <source>
    </source>
</evidence>
<evidence type="ECO:0000269" key="17">
    <source>
    </source>
</evidence>
<evidence type="ECO:0000269" key="18">
    <source>
    </source>
</evidence>
<evidence type="ECO:0000269" key="19">
    <source>
    </source>
</evidence>
<evidence type="ECO:0000269" key="20">
    <source>
    </source>
</evidence>
<evidence type="ECO:0000269" key="21">
    <source>
    </source>
</evidence>
<evidence type="ECO:0000269" key="22">
    <source>
    </source>
</evidence>
<evidence type="ECO:0000269" key="23">
    <source>
    </source>
</evidence>
<evidence type="ECO:0000269" key="24">
    <source>
    </source>
</evidence>
<evidence type="ECO:0000269" key="25">
    <source>
    </source>
</evidence>
<evidence type="ECO:0000269" key="26">
    <source>
    </source>
</evidence>
<evidence type="ECO:0000269" key="27">
    <source>
    </source>
</evidence>
<evidence type="ECO:0000269" key="28">
    <source>
    </source>
</evidence>
<evidence type="ECO:0000269" key="29">
    <source>
    </source>
</evidence>
<evidence type="ECO:0000269" key="30">
    <source>
    </source>
</evidence>
<evidence type="ECO:0000269" key="31">
    <source>
    </source>
</evidence>
<evidence type="ECO:0000269" key="32">
    <source>
    </source>
</evidence>
<evidence type="ECO:0000269" key="33">
    <source>
    </source>
</evidence>
<evidence type="ECO:0000269" key="34">
    <source>
    </source>
</evidence>
<evidence type="ECO:0000269" key="35">
    <source>
    </source>
</evidence>
<evidence type="ECO:0000269" key="36">
    <source>
    </source>
</evidence>
<evidence type="ECO:0000269" key="37">
    <source>
    </source>
</evidence>
<evidence type="ECO:0000269" key="38">
    <source>
    </source>
</evidence>
<evidence type="ECO:0000303" key="39">
    <source>
    </source>
</evidence>
<evidence type="ECO:0000303" key="40">
    <source>
    </source>
</evidence>
<evidence type="ECO:0000303" key="41">
    <source>
    </source>
</evidence>
<evidence type="ECO:0000303" key="42">
    <source>
    </source>
</evidence>
<evidence type="ECO:0000303" key="43">
    <source>
    </source>
</evidence>
<evidence type="ECO:0000305" key="44"/>
<evidence type="ECO:0000305" key="45">
    <source>
    </source>
</evidence>
<evidence type="ECO:0000312" key="46">
    <source>
        <dbReference type="HGNC" id="HGNC:2900"/>
    </source>
</evidence>
<evidence type="ECO:0007744" key="47">
    <source>
    </source>
</evidence>
<evidence type="ECO:0007744" key="48">
    <source>
    </source>
</evidence>
<evidence type="ECO:0007744" key="49">
    <source>
    </source>
</evidence>
<evidence type="ECO:0007744" key="50">
    <source>
    </source>
</evidence>
<evidence type="ECO:0007744" key="51">
    <source>
    </source>
</evidence>
<evidence type="ECO:0007744" key="52">
    <source>
    </source>
</evidence>
<evidence type="ECO:0007829" key="53">
    <source>
        <dbReference type="PDB" id="1PDR"/>
    </source>
</evidence>
<evidence type="ECO:0007829" key="54">
    <source>
        <dbReference type="PDB" id="2OQS"/>
    </source>
</evidence>
<evidence type="ECO:0007829" key="55">
    <source>
        <dbReference type="PDB" id="3LRA"/>
    </source>
</evidence>
<evidence type="ECO:0007829" key="56">
    <source>
        <dbReference type="PDB" id="3W9Y"/>
    </source>
</evidence>
<evidence type="ECO:0007829" key="57">
    <source>
        <dbReference type="PDB" id="7PC3"/>
    </source>
</evidence>
<evidence type="ECO:0007829" key="58">
    <source>
        <dbReference type="PDB" id="8CN1"/>
    </source>
</evidence>
<evidence type="ECO:0007829" key="59">
    <source>
        <dbReference type="PDB" id="8CN3"/>
    </source>
</evidence>
<dbReference type="EMBL" id="U13896">
    <property type="protein sequence ID" value="AAA50598.1"/>
    <property type="molecule type" value="mRNA"/>
</dbReference>
<dbReference type="EMBL" id="U13897">
    <property type="protein sequence ID" value="AAA50599.1"/>
    <property type="molecule type" value="mRNA"/>
</dbReference>
<dbReference type="EMBL" id="AK294772">
    <property type="protein sequence ID" value="BAG57902.1"/>
    <property type="molecule type" value="mRNA"/>
</dbReference>
<dbReference type="EMBL" id="AK294855">
    <property type="protein sequence ID" value="BAG57959.1"/>
    <property type="molecule type" value="mRNA"/>
</dbReference>
<dbReference type="EMBL" id="EF553524">
    <property type="protein sequence ID" value="ABQ66269.1"/>
    <property type="molecule type" value="mRNA"/>
</dbReference>
<dbReference type="EMBL" id="AC068302">
    <property type="status" value="NOT_ANNOTATED_CDS"/>
    <property type="molecule type" value="Genomic_DNA"/>
</dbReference>
<dbReference type="EMBL" id="AC092937">
    <property type="status" value="NOT_ANNOTATED_CDS"/>
    <property type="molecule type" value="Genomic_DNA"/>
</dbReference>
<dbReference type="EMBL" id="CH471191">
    <property type="protein sequence ID" value="EAW53610.1"/>
    <property type="molecule type" value="Genomic_DNA"/>
</dbReference>
<dbReference type="EMBL" id="CH471191">
    <property type="protein sequence ID" value="EAW53611.1"/>
    <property type="molecule type" value="Genomic_DNA"/>
</dbReference>
<dbReference type="EMBL" id="CH471191">
    <property type="protein sequence ID" value="EAW53612.1"/>
    <property type="molecule type" value="Genomic_DNA"/>
</dbReference>
<dbReference type="EMBL" id="CH471191">
    <property type="protein sequence ID" value="EAW53614.1"/>
    <property type="molecule type" value="Genomic_DNA"/>
</dbReference>
<dbReference type="EMBL" id="BC140841">
    <property type="protein sequence ID" value="AAI40842.1"/>
    <property type="molecule type" value="mRNA"/>
</dbReference>
<dbReference type="EMBL" id="BC144651">
    <property type="protein sequence ID" value="AAI44652.1"/>
    <property type="molecule type" value="mRNA"/>
</dbReference>
<dbReference type="CCDS" id="CCDS3327.1">
    <molecule id="Q12959-2"/>
</dbReference>
<dbReference type="CCDS" id="CCDS43194.1">
    <molecule id="Q12959-1"/>
</dbReference>
<dbReference type="CCDS" id="CCDS56300.1">
    <molecule id="Q12959-8"/>
</dbReference>
<dbReference type="CCDS" id="CCDS56301.1">
    <molecule id="Q12959-9"/>
</dbReference>
<dbReference type="CCDS" id="CCDS87192.1">
    <molecule id="Q12959-4"/>
</dbReference>
<dbReference type="CCDS" id="CCDS93449.1">
    <molecule id="Q12959-5"/>
</dbReference>
<dbReference type="CCDS" id="CCDS93452.1">
    <molecule id="Q12959-3"/>
</dbReference>
<dbReference type="PIR" id="I38756">
    <property type="entry name" value="I38756"/>
</dbReference>
<dbReference type="PIR" id="I38757">
    <property type="entry name" value="I38757"/>
</dbReference>
<dbReference type="RefSeq" id="NP_001091894.1">
    <molecule id="Q12959-1"/>
    <property type="nucleotide sequence ID" value="NM_001098424.1"/>
</dbReference>
<dbReference type="RefSeq" id="NP_001191315.1">
    <property type="nucleotide sequence ID" value="NM_001204386.1"/>
</dbReference>
<dbReference type="RefSeq" id="NP_001191316.1">
    <molecule id="Q12959-9"/>
    <property type="nucleotide sequence ID" value="NM_001204387.2"/>
</dbReference>
<dbReference type="RefSeq" id="NP_001191317.1">
    <molecule id="Q12959-8"/>
    <property type="nucleotide sequence ID" value="NM_001204388.2"/>
</dbReference>
<dbReference type="RefSeq" id="NP_001277912.1">
    <molecule id="Q12959-1"/>
    <property type="nucleotide sequence ID" value="NM_001290983.2"/>
</dbReference>
<dbReference type="RefSeq" id="NP_001350794.1">
    <molecule id="Q12959-4"/>
    <property type="nucleotide sequence ID" value="NM_001363865.1"/>
</dbReference>
<dbReference type="RefSeq" id="NP_001353133.1">
    <molecule id="Q12959-3"/>
    <property type="nucleotide sequence ID" value="NM_001366204.1"/>
</dbReference>
<dbReference type="RefSeq" id="NP_001353136.1">
    <molecule id="Q12959-4"/>
    <property type="nucleotide sequence ID" value="NM_001366207.1"/>
</dbReference>
<dbReference type="RefSeq" id="NP_001353137.1">
    <molecule id="Q12959-3"/>
    <property type="nucleotide sequence ID" value="NM_001366208.1"/>
</dbReference>
<dbReference type="RefSeq" id="NP_001353138.1">
    <molecule id="Q12959-3"/>
    <property type="nucleotide sequence ID" value="NM_001366209.1"/>
</dbReference>
<dbReference type="RefSeq" id="NP_001353139.1">
    <molecule id="Q12959-4"/>
    <property type="nucleotide sequence ID" value="NM_001366210.1"/>
</dbReference>
<dbReference type="RefSeq" id="NP_001353141.1">
    <molecule id="Q12959-3"/>
    <property type="nucleotide sequence ID" value="NM_001366212.1"/>
</dbReference>
<dbReference type="RefSeq" id="NP_001353144.1">
    <molecule id="Q12959-4"/>
    <property type="nucleotide sequence ID" value="NM_001366215.1"/>
</dbReference>
<dbReference type="RefSeq" id="NP_001353145.1">
    <molecule id="Q12959-5"/>
    <property type="nucleotide sequence ID" value="NM_001366216.1"/>
</dbReference>
<dbReference type="RefSeq" id="NP_001353147.1">
    <molecule id="Q12959-1"/>
    <property type="nucleotide sequence ID" value="NM_001366218.1"/>
</dbReference>
<dbReference type="RefSeq" id="NP_001353148.1">
    <molecule id="Q12959-5"/>
    <property type="nucleotide sequence ID" value="NM_001366219.1"/>
</dbReference>
<dbReference type="RefSeq" id="NP_004078.2">
    <molecule id="Q12959-2"/>
    <property type="nucleotide sequence ID" value="NM_004087.2"/>
</dbReference>
<dbReference type="RefSeq" id="XP_005269346.1">
    <molecule id="Q12959-2"/>
    <property type="nucleotide sequence ID" value="XM_005269289.5"/>
</dbReference>
<dbReference type="RefSeq" id="XP_011510804.1">
    <molecule id="Q12959-1"/>
    <property type="nucleotide sequence ID" value="XM_011512502.4"/>
</dbReference>
<dbReference type="RefSeq" id="XP_011510805.1">
    <property type="nucleotide sequence ID" value="XM_011512503.1"/>
</dbReference>
<dbReference type="RefSeq" id="XP_011510807.1">
    <property type="nucleotide sequence ID" value="XM_011512505.1"/>
</dbReference>
<dbReference type="RefSeq" id="XP_011510808.1">
    <property type="nucleotide sequence ID" value="XM_011512506.1"/>
</dbReference>
<dbReference type="RefSeq" id="XP_016861289.1">
    <molecule id="Q12959-2"/>
    <property type="nucleotide sequence ID" value="XM_017005800.2"/>
</dbReference>
<dbReference type="RefSeq" id="XP_016861290.1">
    <molecule id="Q12959-2"/>
    <property type="nucleotide sequence ID" value="XM_017005801.2"/>
</dbReference>
<dbReference type="RefSeq" id="XP_016861291.1">
    <molecule id="Q12959-2"/>
    <property type="nucleotide sequence ID" value="XM_017005802.2"/>
</dbReference>
<dbReference type="RefSeq" id="XP_016861292.1">
    <molecule id="Q12959-2"/>
    <property type="nucleotide sequence ID" value="XM_017005803.2"/>
</dbReference>
<dbReference type="RefSeq" id="XP_016861294.1">
    <property type="nucleotide sequence ID" value="XM_017005805.1"/>
</dbReference>
<dbReference type="RefSeq" id="XP_016861295.1">
    <property type="nucleotide sequence ID" value="XM_017005806.1"/>
</dbReference>
<dbReference type="RefSeq" id="XP_016861296.1">
    <property type="nucleotide sequence ID" value="XM_017005807.1"/>
</dbReference>
<dbReference type="RefSeq" id="XP_016861297.1">
    <property type="nucleotide sequence ID" value="XM_017005808.1"/>
</dbReference>
<dbReference type="RefSeq" id="XP_016861298.1">
    <property type="nucleotide sequence ID" value="XM_017005809.1"/>
</dbReference>
<dbReference type="RefSeq" id="XP_016861299.1">
    <property type="nucleotide sequence ID" value="XM_017005810.1"/>
</dbReference>
<dbReference type="RefSeq" id="XP_016861305.1">
    <property type="nucleotide sequence ID" value="XM_017005816.1"/>
</dbReference>
<dbReference type="RefSeq" id="XP_016861306.1">
    <property type="nucleotide sequence ID" value="XM_017005817.1"/>
</dbReference>
<dbReference type="RefSeq" id="XP_016861307.1">
    <property type="nucleotide sequence ID" value="XM_017005818.1"/>
</dbReference>
<dbReference type="RefSeq" id="XP_016861308.1">
    <property type="nucleotide sequence ID" value="XM_017005819.1"/>
</dbReference>
<dbReference type="RefSeq" id="XP_016861309.1">
    <property type="nucleotide sequence ID" value="XM_017005820.1"/>
</dbReference>
<dbReference type="PDB" id="1PDR">
    <property type="method" value="X-ray"/>
    <property type="resolution" value="2.80 A"/>
    <property type="chains" value="A=457-555"/>
</dbReference>
<dbReference type="PDB" id="2M3M">
    <property type="method" value="NMR"/>
    <property type="chains" value="A=318-406"/>
</dbReference>
<dbReference type="PDB" id="2OQS">
    <property type="method" value="NMR"/>
    <property type="chains" value="A=318-406"/>
</dbReference>
<dbReference type="PDB" id="2X7Z">
    <property type="method" value="X-ray"/>
    <property type="resolution" value="2.00 A"/>
    <property type="chains" value="A=311-407"/>
</dbReference>
<dbReference type="PDB" id="3LRA">
    <property type="method" value="X-ray"/>
    <property type="resolution" value="2.95 A"/>
    <property type="chains" value="A=2-65"/>
</dbReference>
<dbReference type="PDB" id="3RL7">
    <property type="method" value="X-ray"/>
    <property type="resolution" value="2.30 A"/>
    <property type="chains" value="A/B/C/D/E/F=220-317"/>
</dbReference>
<dbReference type="PDB" id="3RL8">
    <property type="method" value="X-ray"/>
    <property type="resolution" value="2.20 A"/>
    <property type="chains" value="A/B/C/D/E=315-410"/>
</dbReference>
<dbReference type="PDB" id="3W9Y">
    <property type="method" value="X-ray"/>
    <property type="resolution" value="2.20 A"/>
    <property type="chains" value="A=712-904"/>
</dbReference>
<dbReference type="PDB" id="4AMH">
    <property type="method" value="X-ray"/>
    <property type="resolution" value="2.30 A"/>
    <property type="chains" value="A/B=315-405"/>
</dbReference>
<dbReference type="PDB" id="4G69">
    <property type="method" value="X-ray"/>
    <property type="resolution" value="2.00 A"/>
    <property type="chains" value="A=310-407"/>
</dbReference>
<dbReference type="PDB" id="7PC3">
    <property type="method" value="X-ray"/>
    <property type="resolution" value="1.95 A"/>
    <property type="chains" value="A=314-413"/>
</dbReference>
<dbReference type="PDB" id="8CN1">
    <property type="method" value="X-ray"/>
    <property type="resolution" value="2.09 A"/>
    <property type="chains" value="A/B/C/D/E/F/G/H/I/J/K/L=219-311"/>
</dbReference>
<dbReference type="PDB" id="8CN3">
    <property type="method" value="X-ray"/>
    <property type="resolution" value="2.71 A"/>
    <property type="chains" value="A/B=311-422"/>
</dbReference>
<dbReference type="PDBsum" id="1PDR"/>
<dbReference type="PDBsum" id="2M3M"/>
<dbReference type="PDBsum" id="2OQS"/>
<dbReference type="PDBsum" id="2X7Z"/>
<dbReference type="PDBsum" id="3LRA"/>
<dbReference type="PDBsum" id="3RL7"/>
<dbReference type="PDBsum" id="3RL8"/>
<dbReference type="PDBsum" id="3W9Y"/>
<dbReference type="PDBsum" id="4AMH"/>
<dbReference type="PDBsum" id="4G69"/>
<dbReference type="PDBsum" id="7PC3"/>
<dbReference type="PDBsum" id="8CN1"/>
<dbReference type="PDBsum" id="8CN3"/>
<dbReference type="SMR" id="Q12959"/>
<dbReference type="BioGRID" id="108083">
    <property type="interactions" value="211"/>
</dbReference>
<dbReference type="ComplexPortal" id="CPX-6168">
    <property type="entry name" value="Scribble cell polarity complex, DLG1-LLGL2-SCRIB variant"/>
</dbReference>
<dbReference type="ComplexPortal" id="CPX-6192">
    <property type="entry name" value="Scribble cell polarity complex, DLG1-LLGL1-SCRIB variant"/>
</dbReference>
<dbReference type="CORUM" id="Q12959"/>
<dbReference type="DIP" id="DIP-33957N"/>
<dbReference type="ELM" id="Q12959"/>
<dbReference type="FunCoup" id="Q12959">
    <property type="interactions" value="1906"/>
</dbReference>
<dbReference type="IntAct" id="Q12959">
    <property type="interactions" value="184"/>
</dbReference>
<dbReference type="MINT" id="Q12959"/>
<dbReference type="STRING" id="9606.ENSP00000345731"/>
<dbReference type="TCDB" id="8.A.24.1.7">
    <property type="family name" value="the ezrin/radixin/moesin-binding phosphoprotein 50 (ebp50) family"/>
</dbReference>
<dbReference type="GlyConnect" id="1182">
    <property type="glycosylation" value="1 N-Linked glycan (1 site)"/>
</dbReference>
<dbReference type="GlyCosmos" id="Q12959">
    <property type="glycosylation" value="1 site, 1 glycan"/>
</dbReference>
<dbReference type="GlyGen" id="Q12959">
    <property type="glycosylation" value="5 sites, 2 N-linked glycans (2 sites), 1 O-linked glycan (3 sites)"/>
</dbReference>
<dbReference type="iPTMnet" id="Q12959"/>
<dbReference type="PhosphoSitePlus" id="Q12959"/>
<dbReference type="SwissPalm" id="Q12959"/>
<dbReference type="BioMuta" id="DLG1"/>
<dbReference type="DMDM" id="223590196"/>
<dbReference type="jPOST" id="Q12959"/>
<dbReference type="MassIVE" id="Q12959"/>
<dbReference type="PaxDb" id="9606-ENSP00000345731"/>
<dbReference type="PeptideAtlas" id="Q12959"/>
<dbReference type="ProteomicsDB" id="18869"/>
<dbReference type="ProteomicsDB" id="20226"/>
<dbReference type="ProteomicsDB" id="59049">
    <molecule id="Q12959-1"/>
</dbReference>
<dbReference type="ProteomicsDB" id="59050">
    <molecule id="Q12959-2"/>
</dbReference>
<dbReference type="ProteomicsDB" id="59051">
    <molecule id="Q12959-3"/>
</dbReference>
<dbReference type="ProteomicsDB" id="59052">
    <molecule id="Q12959-4"/>
</dbReference>
<dbReference type="ProteomicsDB" id="59053">
    <molecule id="Q12959-5"/>
</dbReference>
<dbReference type="ProteomicsDB" id="59054">
    <molecule id="Q12959-6"/>
</dbReference>
<dbReference type="ProteomicsDB" id="59055">
    <molecule id="Q12959-7"/>
</dbReference>
<dbReference type="Pumba" id="Q12959"/>
<dbReference type="ABCD" id="Q12959">
    <property type="antibodies" value="1 sequenced antibody"/>
</dbReference>
<dbReference type="Antibodypedia" id="4273">
    <property type="antibodies" value="287 antibodies from 41 providers"/>
</dbReference>
<dbReference type="DNASU" id="1739"/>
<dbReference type="Ensembl" id="ENST00000346964.6">
    <molecule id="Q12959-2"/>
    <property type="protein sequence ID" value="ENSP00000345731.2"/>
    <property type="gene ID" value="ENSG00000075711.21"/>
</dbReference>
<dbReference type="Ensembl" id="ENST00000357674.9">
    <molecule id="Q12959-4"/>
    <property type="protein sequence ID" value="ENSP00000350303.6"/>
    <property type="gene ID" value="ENSG00000075711.21"/>
</dbReference>
<dbReference type="Ensembl" id="ENST00000392382.6">
    <molecule id="Q12959-3"/>
    <property type="protein sequence ID" value="ENSP00000376187.2"/>
    <property type="gene ID" value="ENSG00000075711.21"/>
</dbReference>
<dbReference type="Ensembl" id="ENST00000419354.5">
    <molecule id="Q12959-1"/>
    <property type="protein sequence ID" value="ENSP00000407531.1"/>
    <property type="gene ID" value="ENSG00000075711.21"/>
</dbReference>
<dbReference type="Ensembl" id="ENST00000422288.6">
    <molecule id="Q12959-5"/>
    <property type="protein sequence ID" value="ENSP00000413238.1"/>
    <property type="gene ID" value="ENSG00000075711.21"/>
</dbReference>
<dbReference type="Ensembl" id="ENST00000443183.5">
    <molecule id="Q12959-9"/>
    <property type="protein sequence ID" value="ENSP00000396658.1"/>
    <property type="gene ID" value="ENSG00000075711.21"/>
</dbReference>
<dbReference type="Ensembl" id="ENST00000448528.6">
    <molecule id="Q12959-1"/>
    <property type="protein sequence ID" value="ENSP00000391732.2"/>
    <property type="gene ID" value="ENSG00000075711.21"/>
</dbReference>
<dbReference type="Ensembl" id="ENST00000450955.5">
    <molecule id="Q12959-4"/>
    <property type="protein sequence ID" value="ENSP00000411278.1"/>
    <property type="gene ID" value="ENSG00000075711.21"/>
</dbReference>
<dbReference type="Ensembl" id="ENST00000452595.5">
    <molecule id="Q12959-8"/>
    <property type="protein sequence ID" value="ENSP00000398939.1"/>
    <property type="gene ID" value="ENSG00000075711.21"/>
</dbReference>
<dbReference type="Ensembl" id="ENST00000655488.1">
    <molecule id="Q12959-3"/>
    <property type="protein sequence ID" value="ENSP00000499657.1"/>
    <property type="gene ID" value="ENSG00000075711.21"/>
</dbReference>
<dbReference type="Ensembl" id="ENST00000659716.1">
    <molecule id="Q12959-3"/>
    <property type="protein sequence ID" value="ENSP00000499602.1"/>
    <property type="gene ID" value="ENSG00000075711.21"/>
</dbReference>
<dbReference type="Ensembl" id="ENST00000661453.1">
    <molecule id="Q12959-3"/>
    <property type="protein sequence ID" value="ENSP00000499514.1"/>
    <property type="gene ID" value="ENSG00000075711.21"/>
</dbReference>
<dbReference type="Ensembl" id="ENST00000663148.1">
    <molecule id="Q12959-3"/>
    <property type="protein sequence ID" value="ENSP00000499384.1"/>
    <property type="gene ID" value="ENSG00000075711.21"/>
</dbReference>
<dbReference type="Ensembl" id="ENST00000666007.1">
    <molecule id="Q12959-5"/>
    <property type="protein sequence ID" value="ENSP00000499793.1"/>
    <property type="gene ID" value="ENSG00000075711.21"/>
</dbReference>
<dbReference type="Ensembl" id="ENST00000667157.1">
    <molecule id="Q12959-4"/>
    <property type="protein sequence ID" value="ENSP00000499414.1"/>
    <property type="gene ID" value="ENSG00000075711.21"/>
</dbReference>
<dbReference type="Ensembl" id="ENST00000669565.1">
    <molecule id="Q12959-4"/>
    <property type="protein sequence ID" value="ENSP00000499413.1"/>
    <property type="gene ID" value="ENSG00000075711.21"/>
</dbReference>
<dbReference type="Ensembl" id="ENST00000670455.1">
    <molecule id="Q12959-4"/>
    <property type="protein sequence ID" value="ENSP00000499542.1"/>
    <property type="gene ID" value="ENSG00000075711.21"/>
</dbReference>
<dbReference type="Ensembl" id="ENST00000670935.1">
    <molecule id="Q12959-1"/>
    <property type="protein sequence ID" value="ENSP00000499437.1"/>
    <property type="gene ID" value="ENSG00000075711.21"/>
</dbReference>
<dbReference type="Ensembl" id="ENST00000671185.1">
    <molecule id="Q12959-3"/>
    <property type="protein sequence ID" value="ENSP00000499580.1"/>
    <property type="gene ID" value="ENSG00000075711.21"/>
</dbReference>
<dbReference type="GeneID" id="1739"/>
<dbReference type="KEGG" id="hsa:1739"/>
<dbReference type="MANE-Select" id="ENST00000667157.1">
    <molecule id="Q12959-4"/>
    <property type="protein sequence ID" value="ENSP00000499414.1"/>
    <property type="RefSeq nucleotide sequence ID" value="NM_001366207.1"/>
    <property type="RefSeq protein sequence ID" value="NP_001353136.1"/>
</dbReference>
<dbReference type="UCSC" id="uc003fxn.4">
    <molecule id="Q12959-1"/>
    <property type="organism name" value="human"/>
</dbReference>
<dbReference type="AGR" id="HGNC:2900"/>
<dbReference type="CTD" id="1739"/>
<dbReference type="DisGeNET" id="1739"/>
<dbReference type="GeneCards" id="DLG1"/>
<dbReference type="HGNC" id="HGNC:2900">
    <property type="gene designation" value="DLG1"/>
</dbReference>
<dbReference type="HPA" id="ENSG00000075711">
    <property type="expression patterns" value="Low tissue specificity"/>
</dbReference>
<dbReference type="MalaCards" id="DLG1"/>
<dbReference type="MIM" id="601014">
    <property type="type" value="gene"/>
</dbReference>
<dbReference type="neXtProt" id="NX_Q12959"/>
<dbReference type="OpenTargets" id="ENSG00000075711"/>
<dbReference type="Orphanet" id="199306">
    <property type="disease" value="Cleft lip/palate"/>
</dbReference>
<dbReference type="PharmGKB" id="PA27356"/>
<dbReference type="VEuPathDB" id="HostDB:ENSG00000075711"/>
<dbReference type="eggNOG" id="KOG0708">
    <property type="taxonomic scope" value="Eukaryota"/>
</dbReference>
<dbReference type="GeneTree" id="ENSGT00940000159409"/>
<dbReference type="HOGENOM" id="CLU_001715_4_2_1"/>
<dbReference type="InParanoid" id="Q12959"/>
<dbReference type="OMA" id="TNEMIGP"/>
<dbReference type="OrthoDB" id="78824at2759"/>
<dbReference type="PAN-GO" id="Q12959">
    <property type="GO annotations" value="10 GO annotations based on evolutionary models"/>
</dbReference>
<dbReference type="PhylomeDB" id="Q12959"/>
<dbReference type="TreeFam" id="TF323171"/>
<dbReference type="BRENDA" id="2.7.4.8">
    <property type="organism ID" value="2681"/>
</dbReference>
<dbReference type="PathwayCommons" id="Q12959"/>
<dbReference type="Reactome" id="R-HSA-399719">
    <property type="pathway name" value="Trafficking of AMPA receptors"/>
</dbReference>
<dbReference type="Reactome" id="R-HSA-438066">
    <property type="pathway name" value="Unblocking of NMDA receptors, glutamate binding and activation"/>
</dbReference>
<dbReference type="Reactome" id="R-HSA-442982">
    <property type="pathway name" value="Ras activation upon Ca2+ influx through NMDA receptor"/>
</dbReference>
<dbReference type="Reactome" id="R-HSA-447038">
    <property type="pathway name" value="NrCAM interactions"/>
</dbReference>
<dbReference type="Reactome" id="R-HSA-451308">
    <property type="pathway name" value="Activation of Ca-permeable Kainate Receptor"/>
</dbReference>
<dbReference type="Reactome" id="R-HSA-5673001">
    <property type="pathway name" value="RAF/MAP kinase cascade"/>
</dbReference>
<dbReference type="Reactome" id="R-HSA-8849932">
    <property type="pathway name" value="Synaptic adhesion-like molecules"/>
</dbReference>
<dbReference type="Reactome" id="R-HSA-9609736">
    <property type="pathway name" value="Assembly and cell surface presentation of NMDA receptors"/>
</dbReference>
<dbReference type="Reactome" id="R-HSA-9617324">
    <property type="pathway name" value="Negative regulation of NMDA receptor-mediated neuronal transmission"/>
</dbReference>
<dbReference type="Reactome" id="R-HSA-9620244">
    <property type="pathway name" value="Long-term potentiation"/>
</dbReference>
<dbReference type="SignaLink" id="Q12959"/>
<dbReference type="SIGNOR" id="Q12959"/>
<dbReference type="BioGRID-ORCS" id="1739">
    <property type="hits" value="215 hits in 1176 CRISPR screens"/>
</dbReference>
<dbReference type="CD-CODE" id="FB4E32DD">
    <property type="entry name" value="Presynaptic clusters and postsynaptic densities"/>
</dbReference>
<dbReference type="ChiTaRS" id="DLG1">
    <property type="organism name" value="human"/>
</dbReference>
<dbReference type="EvolutionaryTrace" id="Q12959"/>
<dbReference type="GeneWiki" id="DLG1"/>
<dbReference type="GenomeRNAi" id="1739"/>
<dbReference type="Pharos" id="Q12959">
    <property type="development level" value="Tbio"/>
</dbReference>
<dbReference type="PRO" id="PR:Q12959"/>
<dbReference type="Proteomes" id="UP000005640">
    <property type="component" value="Chromosome 3"/>
</dbReference>
<dbReference type="RNAct" id="Q12959">
    <property type="molecule type" value="protein"/>
</dbReference>
<dbReference type="Bgee" id="ENSG00000075711">
    <property type="expression patterns" value="Expressed in endothelial cell and 211 other cell types or tissues"/>
</dbReference>
<dbReference type="ExpressionAtlas" id="Q12959">
    <property type="expression patterns" value="baseline and differential"/>
</dbReference>
<dbReference type="GO" id="GO:0005912">
    <property type="term" value="C:adherens junction"/>
    <property type="evidence" value="ECO:0000303"/>
    <property type="project" value="ComplexPortal"/>
</dbReference>
<dbReference type="GO" id="GO:0016324">
    <property type="term" value="C:apical plasma membrane"/>
    <property type="evidence" value="ECO:0007669"/>
    <property type="project" value="UniProtKB-SubCell"/>
</dbReference>
<dbReference type="GO" id="GO:0005604">
    <property type="term" value="C:basement membrane"/>
    <property type="evidence" value="ECO:0007669"/>
    <property type="project" value="Ensembl"/>
</dbReference>
<dbReference type="GO" id="GO:0016323">
    <property type="term" value="C:basolateral plasma membrane"/>
    <property type="evidence" value="ECO:0000314"/>
    <property type="project" value="UniProtKB"/>
</dbReference>
<dbReference type="GO" id="GO:0005923">
    <property type="term" value="C:bicellular tight junction"/>
    <property type="evidence" value="ECO:0000314"/>
    <property type="project" value="BHF-UCL"/>
</dbReference>
<dbReference type="GO" id="GO:0030054">
    <property type="term" value="C:cell junction"/>
    <property type="evidence" value="ECO:0000314"/>
    <property type="project" value="UniProtKB"/>
</dbReference>
<dbReference type="GO" id="GO:0031253">
    <property type="term" value="C:cell projection membrane"/>
    <property type="evidence" value="ECO:0007669"/>
    <property type="project" value="Ensembl"/>
</dbReference>
<dbReference type="GO" id="GO:0005911">
    <property type="term" value="C:cell-cell junction"/>
    <property type="evidence" value="ECO:0000314"/>
    <property type="project" value="UniProtKB"/>
</dbReference>
<dbReference type="GO" id="GO:0005737">
    <property type="term" value="C:cytoplasm"/>
    <property type="evidence" value="ECO:0000314"/>
    <property type="project" value="UniProtKB"/>
</dbReference>
<dbReference type="GO" id="GO:0009898">
    <property type="term" value="C:cytoplasmic side of plasma membrane"/>
    <property type="evidence" value="ECO:0000314"/>
    <property type="project" value="UniProtKB"/>
</dbReference>
<dbReference type="GO" id="GO:0005829">
    <property type="term" value="C:cytosol"/>
    <property type="evidence" value="ECO:0000304"/>
    <property type="project" value="Reactome"/>
</dbReference>
<dbReference type="GO" id="GO:0005783">
    <property type="term" value="C:endoplasmic reticulum"/>
    <property type="evidence" value="ECO:0000314"/>
    <property type="project" value="UniProtKB"/>
</dbReference>
<dbReference type="GO" id="GO:0005789">
    <property type="term" value="C:endoplasmic reticulum membrane"/>
    <property type="evidence" value="ECO:0007669"/>
    <property type="project" value="UniProtKB-SubCell"/>
</dbReference>
<dbReference type="GO" id="GO:0070062">
    <property type="term" value="C:extracellular exosome"/>
    <property type="evidence" value="ECO:0007005"/>
    <property type="project" value="UniProtKB"/>
</dbReference>
<dbReference type="GO" id="GO:0098978">
    <property type="term" value="C:glutamatergic synapse"/>
    <property type="evidence" value="ECO:0007669"/>
    <property type="project" value="Ensembl"/>
</dbReference>
<dbReference type="GO" id="GO:0005794">
    <property type="term" value="C:Golgi apparatus"/>
    <property type="evidence" value="ECO:0000314"/>
    <property type="project" value="UniProtKB"/>
</dbReference>
<dbReference type="GO" id="GO:0001772">
    <property type="term" value="C:immunological synapse"/>
    <property type="evidence" value="ECO:0000314"/>
    <property type="project" value="UniProtKB"/>
</dbReference>
<dbReference type="GO" id="GO:0014704">
    <property type="term" value="C:intercalated disc"/>
    <property type="evidence" value="ECO:0000304"/>
    <property type="project" value="BHF-UCL"/>
</dbReference>
<dbReference type="GO" id="GO:0043219">
    <property type="term" value="C:lateral loop"/>
    <property type="evidence" value="ECO:0007669"/>
    <property type="project" value="Ensembl"/>
</dbReference>
<dbReference type="GO" id="GO:0016328">
    <property type="term" value="C:lateral plasma membrane"/>
    <property type="evidence" value="ECO:0007669"/>
    <property type="project" value="Ensembl"/>
</dbReference>
<dbReference type="GO" id="GO:0045121">
    <property type="term" value="C:membrane raft"/>
    <property type="evidence" value="ECO:0007669"/>
    <property type="project" value="Ensembl"/>
</dbReference>
<dbReference type="GO" id="GO:0005874">
    <property type="term" value="C:microtubule"/>
    <property type="evidence" value="ECO:0000314"/>
    <property type="project" value="UniProtKB"/>
</dbReference>
<dbReference type="GO" id="GO:0097025">
    <property type="term" value="C:MPP7-DLG1-LIN7 complex"/>
    <property type="evidence" value="ECO:0000314"/>
    <property type="project" value="BHF-UCL"/>
</dbReference>
<dbReference type="GO" id="GO:0035748">
    <property type="term" value="C:myelin sheath abaxonal region"/>
    <property type="evidence" value="ECO:0007669"/>
    <property type="project" value="Ensembl"/>
</dbReference>
<dbReference type="GO" id="GO:0031594">
    <property type="term" value="C:neuromuscular junction"/>
    <property type="evidence" value="ECO:0000318"/>
    <property type="project" value="GO_Central"/>
</dbReference>
<dbReference type="GO" id="GO:0043005">
    <property type="term" value="C:neuron projection"/>
    <property type="evidence" value="ECO:0000318"/>
    <property type="project" value="GO_Central"/>
</dbReference>
<dbReference type="GO" id="GO:0033268">
    <property type="term" value="C:node of Ranvier"/>
    <property type="evidence" value="ECO:0007669"/>
    <property type="project" value="Ensembl"/>
</dbReference>
<dbReference type="GO" id="GO:0005634">
    <property type="term" value="C:nucleus"/>
    <property type="evidence" value="ECO:0000314"/>
    <property type="project" value="BHF-UCL"/>
</dbReference>
<dbReference type="GO" id="GO:0048471">
    <property type="term" value="C:perinuclear region of cytoplasm"/>
    <property type="evidence" value="ECO:0000314"/>
    <property type="project" value="UniProtKB"/>
</dbReference>
<dbReference type="GO" id="GO:0005886">
    <property type="term" value="C:plasma membrane"/>
    <property type="evidence" value="ECO:0000314"/>
    <property type="project" value="UniProtKB"/>
</dbReference>
<dbReference type="GO" id="GO:0098839">
    <property type="term" value="C:postsynaptic density membrane"/>
    <property type="evidence" value="ECO:0000318"/>
    <property type="project" value="GO_Central"/>
</dbReference>
<dbReference type="GO" id="GO:0042383">
    <property type="term" value="C:sarcolemma"/>
    <property type="evidence" value="ECO:0007669"/>
    <property type="project" value="UniProtKB-SubCell"/>
</dbReference>
<dbReference type="GO" id="GO:0097060">
    <property type="term" value="C:synaptic membrane"/>
    <property type="evidence" value="ECO:0000314"/>
    <property type="project" value="UniProtKB"/>
</dbReference>
<dbReference type="GO" id="GO:0045296">
    <property type="term" value="F:cadherin binding"/>
    <property type="evidence" value="ECO:0007005"/>
    <property type="project" value="BHF-UCL"/>
</dbReference>
<dbReference type="GO" id="GO:0008092">
    <property type="term" value="F:cytoskeletal protein binding"/>
    <property type="evidence" value="ECO:0000304"/>
    <property type="project" value="ProtInc"/>
</dbReference>
<dbReference type="GO" id="GO:0004385">
    <property type="term" value="F:guanylate kinase activity"/>
    <property type="evidence" value="ECO:0000304"/>
    <property type="project" value="ProtInc"/>
</dbReference>
<dbReference type="GO" id="GO:0035255">
    <property type="term" value="F:ionotropic glutamate receptor binding"/>
    <property type="evidence" value="ECO:0000318"/>
    <property type="project" value="GO_Central"/>
</dbReference>
<dbReference type="GO" id="GO:0019900">
    <property type="term" value="F:kinase binding"/>
    <property type="evidence" value="ECO:0000314"/>
    <property type="project" value="MGI"/>
</dbReference>
<dbReference type="GO" id="GO:0097016">
    <property type="term" value="F:L27 domain binding"/>
    <property type="evidence" value="ECO:0000353"/>
    <property type="project" value="BHF-UCL"/>
</dbReference>
<dbReference type="GO" id="GO:0060090">
    <property type="term" value="F:molecular adaptor activity"/>
    <property type="evidence" value="ECO:0007669"/>
    <property type="project" value="Ensembl"/>
</dbReference>
<dbReference type="GO" id="GO:0019902">
    <property type="term" value="F:phosphatase binding"/>
    <property type="evidence" value="ECO:0000353"/>
    <property type="project" value="UniProtKB"/>
</dbReference>
<dbReference type="GO" id="GO:0004721">
    <property type="term" value="F:phosphoprotein phosphatase activity"/>
    <property type="evidence" value="ECO:0000304"/>
    <property type="project" value="UniProtKB"/>
</dbReference>
<dbReference type="GO" id="GO:0015459">
    <property type="term" value="F:potassium channel regulator activity"/>
    <property type="evidence" value="ECO:0000314"/>
    <property type="project" value="BHF-UCL"/>
</dbReference>
<dbReference type="GO" id="GO:0019901">
    <property type="term" value="F:protein kinase binding"/>
    <property type="evidence" value="ECO:0000318"/>
    <property type="project" value="GO_Central"/>
</dbReference>
<dbReference type="GO" id="GO:0098919">
    <property type="term" value="F:structural constituent of postsynaptic density"/>
    <property type="evidence" value="ECO:0007669"/>
    <property type="project" value="Ensembl"/>
</dbReference>
<dbReference type="GO" id="GO:0044325">
    <property type="term" value="F:transmembrane transporter binding"/>
    <property type="evidence" value="ECO:0000353"/>
    <property type="project" value="BHF-UCL"/>
</dbReference>
<dbReference type="GO" id="GO:0007015">
    <property type="term" value="P:actin filament organization"/>
    <property type="evidence" value="ECO:0000314"/>
    <property type="project" value="UniProtKB"/>
</dbReference>
<dbReference type="GO" id="GO:0030041">
    <property type="term" value="P:actin filament polymerization"/>
    <property type="evidence" value="ECO:0007669"/>
    <property type="project" value="Ensembl"/>
</dbReference>
<dbReference type="GO" id="GO:0042982">
    <property type="term" value="P:amyloid precursor protein metabolic process"/>
    <property type="evidence" value="ECO:0007669"/>
    <property type="project" value="Ensembl"/>
</dbReference>
<dbReference type="GO" id="GO:0030953">
    <property type="term" value="P:astral microtubule organization"/>
    <property type="evidence" value="ECO:0000315"/>
    <property type="project" value="UniProtKB"/>
</dbReference>
<dbReference type="GO" id="GO:0070830">
    <property type="term" value="P:bicellular tight junction assembly"/>
    <property type="evidence" value="ECO:0000314"/>
    <property type="project" value="BHF-UCL"/>
</dbReference>
<dbReference type="GO" id="GO:0001658">
    <property type="term" value="P:branching involved in ureteric bud morphogenesis"/>
    <property type="evidence" value="ECO:0007669"/>
    <property type="project" value="Ensembl"/>
</dbReference>
<dbReference type="GO" id="GO:0098609">
    <property type="term" value="P:cell-cell adhesion"/>
    <property type="evidence" value="ECO:0000314"/>
    <property type="project" value="UniProtKB"/>
</dbReference>
<dbReference type="GO" id="GO:0007268">
    <property type="term" value="P:chemical synaptic transmission"/>
    <property type="evidence" value="ECO:0000318"/>
    <property type="project" value="GO_Central"/>
</dbReference>
<dbReference type="GO" id="GO:0030866">
    <property type="term" value="P:cortical actin cytoskeleton organization"/>
    <property type="evidence" value="ECO:0000314"/>
    <property type="project" value="UniProtKB"/>
</dbReference>
<dbReference type="GO" id="GO:0043622">
    <property type="term" value="P:cortical microtubule organization"/>
    <property type="evidence" value="ECO:0000315"/>
    <property type="project" value="UniProtKB"/>
</dbReference>
<dbReference type="GO" id="GO:0048704">
    <property type="term" value="P:embryonic skeletal system morphogenesis"/>
    <property type="evidence" value="ECO:0007669"/>
    <property type="project" value="Ensembl"/>
</dbReference>
<dbReference type="GO" id="GO:0001935">
    <property type="term" value="P:endothelial cell proliferation"/>
    <property type="evidence" value="ECO:0000314"/>
    <property type="project" value="UniProtKB"/>
</dbReference>
<dbReference type="GO" id="GO:0051660">
    <property type="term" value="P:establishment of centrosome localization"/>
    <property type="evidence" value="ECO:0000315"/>
    <property type="project" value="UniProtKB"/>
</dbReference>
<dbReference type="GO" id="GO:0007163">
    <property type="term" value="P:establishment or maintenance of cell polarity"/>
    <property type="evidence" value="ECO:0000304"/>
    <property type="project" value="UniProtKB"/>
</dbReference>
<dbReference type="GO" id="GO:0045197">
    <property type="term" value="P:establishment or maintenance of epithelial cell apical/basal polarity"/>
    <property type="evidence" value="ECO:0000318"/>
    <property type="project" value="GO_Central"/>
</dbReference>
<dbReference type="GO" id="GO:0060022">
    <property type="term" value="P:hard palate development"/>
    <property type="evidence" value="ECO:0007669"/>
    <property type="project" value="Ensembl"/>
</dbReference>
<dbReference type="GO" id="GO:0001771">
    <property type="term" value="P:immunological synapse formation"/>
    <property type="evidence" value="ECO:0007669"/>
    <property type="project" value="Ensembl"/>
</dbReference>
<dbReference type="GO" id="GO:0002088">
    <property type="term" value="P:lens development in camera-type eye"/>
    <property type="evidence" value="ECO:0007669"/>
    <property type="project" value="Ensembl"/>
</dbReference>
<dbReference type="GO" id="GO:0031579">
    <property type="term" value="P:membrane raft organization"/>
    <property type="evidence" value="ECO:0007669"/>
    <property type="project" value="Ensembl"/>
</dbReference>
<dbReference type="GO" id="GO:0098915">
    <property type="term" value="P:membrane repolarization during ventricular cardiac muscle cell action potential"/>
    <property type="evidence" value="ECO:0000250"/>
    <property type="project" value="BHF-UCL"/>
</dbReference>
<dbReference type="GO" id="GO:0050680">
    <property type="term" value="P:negative regulation of epithelial cell proliferation"/>
    <property type="evidence" value="ECO:0007669"/>
    <property type="project" value="Ensembl"/>
</dbReference>
<dbReference type="GO" id="GO:0070373">
    <property type="term" value="P:negative regulation of ERK1 and ERK2 cascade"/>
    <property type="evidence" value="ECO:0000315"/>
    <property type="project" value="UniProtKB"/>
</dbReference>
<dbReference type="GO" id="GO:2000134">
    <property type="term" value="P:negative regulation of G1/S transition of mitotic cell cycle"/>
    <property type="evidence" value="ECO:0000315"/>
    <property type="project" value="UniProtKB"/>
</dbReference>
<dbReference type="GO" id="GO:1903753">
    <property type="term" value="P:negative regulation of p38MAPK cascade"/>
    <property type="evidence" value="ECO:0000315"/>
    <property type="project" value="UniProtKB"/>
</dbReference>
<dbReference type="GO" id="GO:0051898">
    <property type="term" value="P:negative regulation of phosphatidylinositol 3-kinase/protein kinase B signal transduction"/>
    <property type="evidence" value="ECO:0007669"/>
    <property type="project" value="Ensembl"/>
</dbReference>
<dbReference type="GO" id="GO:0042130">
    <property type="term" value="P:negative regulation of T cell proliferation"/>
    <property type="evidence" value="ECO:0007669"/>
    <property type="project" value="Ensembl"/>
</dbReference>
<dbReference type="GO" id="GO:0000122">
    <property type="term" value="P:negative regulation of transcription by RNA polymerase II"/>
    <property type="evidence" value="ECO:0000315"/>
    <property type="project" value="UniProtKB"/>
</dbReference>
<dbReference type="GO" id="GO:0007399">
    <property type="term" value="P:nervous system development"/>
    <property type="evidence" value="ECO:0000318"/>
    <property type="project" value="GO_Central"/>
</dbReference>
<dbReference type="GO" id="GO:0099645">
    <property type="term" value="P:neurotransmitter receptor localization to postsynaptic specialization membrane"/>
    <property type="evidence" value="ECO:0007669"/>
    <property type="project" value="Ensembl"/>
</dbReference>
<dbReference type="GO" id="GO:0030432">
    <property type="term" value="P:peristalsis"/>
    <property type="evidence" value="ECO:0007669"/>
    <property type="project" value="Ensembl"/>
</dbReference>
<dbReference type="GO" id="GO:0043491">
    <property type="term" value="P:phosphatidylinositol 3-kinase/protein kinase B signal transduction"/>
    <property type="evidence" value="ECO:0007669"/>
    <property type="project" value="Ensembl"/>
</dbReference>
<dbReference type="GO" id="GO:0030838">
    <property type="term" value="P:positive regulation of actin filament polymerization"/>
    <property type="evidence" value="ECO:0007669"/>
    <property type="project" value="Ensembl"/>
</dbReference>
<dbReference type="GO" id="GO:0008284">
    <property type="term" value="P:positive regulation of cell population proliferation"/>
    <property type="evidence" value="ECO:0007669"/>
    <property type="project" value="Ensembl"/>
</dbReference>
<dbReference type="GO" id="GO:0043268">
    <property type="term" value="P:positive regulation of potassium ion transport"/>
    <property type="evidence" value="ECO:0000314"/>
    <property type="project" value="BHF-UCL"/>
</dbReference>
<dbReference type="GO" id="GO:1903078">
    <property type="term" value="P:positive regulation of protein localization to plasma membrane"/>
    <property type="evidence" value="ECO:0000314"/>
    <property type="project" value="BHF-UCL"/>
</dbReference>
<dbReference type="GO" id="GO:0072659">
    <property type="term" value="P:protein localization to plasma membrane"/>
    <property type="evidence" value="ECO:0000315"/>
    <property type="project" value="BHF-UCL"/>
</dbReference>
<dbReference type="GO" id="GO:0035418">
    <property type="term" value="P:protein localization to synapse"/>
    <property type="evidence" value="ECO:0000318"/>
    <property type="project" value="GO_Central"/>
</dbReference>
<dbReference type="GO" id="GO:0031503">
    <property type="term" value="P:protein-containing complex localization"/>
    <property type="evidence" value="ECO:0000315"/>
    <property type="project" value="UniProtKB"/>
</dbReference>
<dbReference type="GO" id="GO:0043113">
    <property type="term" value="P:receptor clustering"/>
    <property type="evidence" value="ECO:0000318"/>
    <property type="project" value="GO_Central"/>
</dbReference>
<dbReference type="GO" id="GO:0097120">
    <property type="term" value="P:receptor localization to synapse"/>
    <property type="evidence" value="ECO:0000318"/>
    <property type="project" value="GO_Central"/>
</dbReference>
<dbReference type="GO" id="GO:0008360">
    <property type="term" value="P:regulation of cell shape"/>
    <property type="evidence" value="ECO:0000315"/>
    <property type="project" value="UniProtKB"/>
</dbReference>
<dbReference type="GO" id="GO:0042391">
    <property type="term" value="P:regulation of membrane potential"/>
    <property type="evidence" value="ECO:0000314"/>
    <property type="project" value="BHF-UCL"/>
</dbReference>
<dbReference type="GO" id="GO:0031641">
    <property type="term" value="P:regulation of myelination"/>
    <property type="evidence" value="ECO:0007669"/>
    <property type="project" value="Ensembl"/>
</dbReference>
<dbReference type="GO" id="GO:0099072">
    <property type="term" value="P:regulation of postsynaptic membrane neurotransmitter receptor levels"/>
    <property type="evidence" value="ECO:0000318"/>
    <property type="project" value="GO_Central"/>
</dbReference>
<dbReference type="GO" id="GO:1903764">
    <property type="term" value="P:regulation of potassium ion export across plasma membrane"/>
    <property type="evidence" value="ECO:0000250"/>
    <property type="project" value="BHF-UCL"/>
</dbReference>
<dbReference type="GO" id="GO:1903286">
    <property type="term" value="P:regulation of potassium ion import"/>
    <property type="evidence" value="ECO:0000250"/>
    <property type="project" value="BHF-UCL"/>
</dbReference>
<dbReference type="GO" id="GO:1902473">
    <property type="term" value="P:regulation of protein localization to synapse"/>
    <property type="evidence" value="ECO:0000314"/>
    <property type="project" value="UniProtKB"/>
</dbReference>
<dbReference type="GO" id="GO:1902305">
    <property type="term" value="P:regulation of sodium ion transmembrane transport"/>
    <property type="evidence" value="ECO:0000304"/>
    <property type="project" value="BHF-UCL"/>
</dbReference>
<dbReference type="GO" id="GO:0098911">
    <property type="term" value="P:regulation of ventricular cardiac muscle cell action potential"/>
    <property type="evidence" value="ECO:0000250"/>
    <property type="project" value="BHF-UCL"/>
</dbReference>
<dbReference type="GO" id="GO:0048608">
    <property type="term" value="P:reproductive structure development"/>
    <property type="evidence" value="ECO:0007669"/>
    <property type="project" value="Ensembl"/>
</dbReference>
<dbReference type="GO" id="GO:0048745">
    <property type="term" value="P:smooth muscle tissue development"/>
    <property type="evidence" value="ECO:0007669"/>
    <property type="project" value="Ensembl"/>
</dbReference>
<dbReference type="GO" id="GO:0042098">
    <property type="term" value="P:T cell proliferation"/>
    <property type="evidence" value="ECO:0007669"/>
    <property type="project" value="Ensembl"/>
</dbReference>
<dbReference type="CDD" id="cd00071">
    <property type="entry name" value="GMPK"/>
    <property type="match status" value="1"/>
</dbReference>
<dbReference type="CDD" id="cd06723">
    <property type="entry name" value="PDZ1_Dlg1-2-4-like"/>
    <property type="match status" value="1"/>
</dbReference>
<dbReference type="CDD" id="cd06724">
    <property type="entry name" value="PDZ2_Dlg1-2-4-like"/>
    <property type="match status" value="1"/>
</dbReference>
<dbReference type="CDD" id="cd06795">
    <property type="entry name" value="PDZ3_Dlg1-2-4-like"/>
    <property type="match status" value="1"/>
</dbReference>
<dbReference type="CDD" id="cd12031">
    <property type="entry name" value="SH3_DLG1"/>
    <property type="match status" value="1"/>
</dbReference>
<dbReference type="FunFam" id="3.40.50.300:FF:001402">
    <property type="entry name" value="Discs, large homolog 3 (Drosophila)"/>
    <property type="match status" value="1"/>
</dbReference>
<dbReference type="FunFam" id="1.10.287.470:FF:000001">
    <property type="entry name" value="Disks large 1 isoform X3"/>
    <property type="match status" value="1"/>
</dbReference>
<dbReference type="FunFam" id="2.30.30.40:FF:000008">
    <property type="entry name" value="Disks large homolog 1 isoform 2"/>
    <property type="match status" value="1"/>
</dbReference>
<dbReference type="FunFam" id="2.30.42.10:FF:000001">
    <property type="entry name" value="Disks large homolog 1 isoform 2"/>
    <property type="match status" value="1"/>
</dbReference>
<dbReference type="FunFam" id="3.30.63.10:FF:000001">
    <property type="entry name" value="Disks large homolog 1 isoform 2"/>
    <property type="match status" value="1"/>
</dbReference>
<dbReference type="FunFam" id="2.30.30.40:FF:000058">
    <property type="entry name" value="Disks large homolog 1 isoform X1"/>
    <property type="match status" value="1"/>
</dbReference>
<dbReference type="FunFam" id="2.30.42.10:FF:000049">
    <property type="entry name" value="disks large homolog 1 isoform X1"/>
    <property type="match status" value="1"/>
</dbReference>
<dbReference type="FunFam" id="2.30.42.10:FF:000002">
    <property type="entry name" value="Disks large homolog 4 isoform 2"/>
    <property type="match status" value="1"/>
</dbReference>
<dbReference type="Gene3D" id="2.30.42.10">
    <property type="match status" value="3"/>
</dbReference>
<dbReference type="Gene3D" id="3.30.63.10">
    <property type="entry name" value="Guanylate Kinase phosphate binding domain"/>
    <property type="match status" value="1"/>
</dbReference>
<dbReference type="Gene3D" id="1.10.287.470">
    <property type="entry name" value="Helix hairpin bin"/>
    <property type="match status" value="1"/>
</dbReference>
<dbReference type="Gene3D" id="3.40.50.300">
    <property type="entry name" value="P-loop containing nucleotide triphosphate hydrolases"/>
    <property type="match status" value="1"/>
</dbReference>
<dbReference type="Gene3D" id="2.30.30.40">
    <property type="entry name" value="SH3 Domains"/>
    <property type="match status" value="1"/>
</dbReference>
<dbReference type="IDEAL" id="IID00513"/>
<dbReference type="InterPro" id="IPR019583">
    <property type="entry name" value="DLG1-4_PDZ_assoc"/>
</dbReference>
<dbReference type="InterPro" id="IPR016313">
    <property type="entry name" value="DLG1-like"/>
</dbReference>
<dbReference type="InterPro" id="IPR019590">
    <property type="entry name" value="DLG1_PEST_dom"/>
</dbReference>
<dbReference type="InterPro" id="IPR008145">
    <property type="entry name" value="GK/Ca_channel_bsu"/>
</dbReference>
<dbReference type="InterPro" id="IPR008144">
    <property type="entry name" value="Guanylate_kin-like_dom"/>
</dbReference>
<dbReference type="InterPro" id="IPR020590">
    <property type="entry name" value="Guanylate_kinase_CS"/>
</dbReference>
<dbReference type="InterPro" id="IPR015143">
    <property type="entry name" value="L27_1"/>
</dbReference>
<dbReference type="InterPro" id="IPR004172">
    <property type="entry name" value="L27_dom"/>
</dbReference>
<dbReference type="InterPro" id="IPR036892">
    <property type="entry name" value="L27_dom_sf"/>
</dbReference>
<dbReference type="InterPro" id="IPR027417">
    <property type="entry name" value="P-loop_NTPase"/>
</dbReference>
<dbReference type="InterPro" id="IPR001478">
    <property type="entry name" value="PDZ"/>
</dbReference>
<dbReference type="InterPro" id="IPR036034">
    <property type="entry name" value="PDZ_sf"/>
</dbReference>
<dbReference type="InterPro" id="IPR036028">
    <property type="entry name" value="SH3-like_dom_sf"/>
</dbReference>
<dbReference type="InterPro" id="IPR001452">
    <property type="entry name" value="SH3_domain"/>
</dbReference>
<dbReference type="InterPro" id="IPR050614">
    <property type="entry name" value="Synaptic_Scaffolding_LAP-MAGUK"/>
</dbReference>
<dbReference type="PANTHER" id="PTHR23119">
    <property type="entry name" value="DISCS LARGE"/>
    <property type="match status" value="1"/>
</dbReference>
<dbReference type="PANTHER" id="PTHR23119:SF5">
    <property type="entry name" value="DISKS LARGE HOMOLOG 1"/>
    <property type="match status" value="1"/>
</dbReference>
<dbReference type="Pfam" id="PF00625">
    <property type="entry name" value="Guanylate_kin"/>
    <property type="match status" value="1"/>
</dbReference>
<dbReference type="Pfam" id="PF09058">
    <property type="entry name" value="L27_1"/>
    <property type="match status" value="1"/>
</dbReference>
<dbReference type="Pfam" id="PF10608">
    <property type="entry name" value="MAGUK_N_PEST"/>
    <property type="match status" value="1"/>
</dbReference>
<dbReference type="Pfam" id="PF00595">
    <property type="entry name" value="PDZ"/>
    <property type="match status" value="3"/>
</dbReference>
<dbReference type="Pfam" id="PF10600">
    <property type="entry name" value="PDZ_assoc"/>
    <property type="match status" value="1"/>
</dbReference>
<dbReference type="Pfam" id="PF00018">
    <property type="entry name" value="SH3_1"/>
    <property type="match status" value="1"/>
</dbReference>
<dbReference type="PIRSF" id="PIRSF001741">
    <property type="entry name" value="MAGUK_DLGH"/>
    <property type="match status" value="1"/>
</dbReference>
<dbReference type="SMART" id="SM00072">
    <property type="entry name" value="GuKc"/>
    <property type="match status" value="1"/>
</dbReference>
<dbReference type="SMART" id="SM00569">
    <property type="entry name" value="L27"/>
    <property type="match status" value="1"/>
</dbReference>
<dbReference type="SMART" id="SM01277">
    <property type="entry name" value="MAGUK_N_PEST"/>
    <property type="match status" value="1"/>
</dbReference>
<dbReference type="SMART" id="SM00228">
    <property type="entry name" value="PDZ"/>
    <property type="match status" value="3"/>
</dbReference>
<dbReference type="SMART" id="SM00326">
    <property type="entry name" value="SH3"/>
    <property type="match status" value="1"/>
</dbReference>
<dbReference type="SUPFAM" id="SSF101288">
    <property type="entry name" value="L27 domain"/>
    <property type="match status" value="1"/>
</dbReference>
<dbReference type="SUPFAM" id="SSF52540">
    <property type="entry name" value="P-loop containing nucleoside triphosphate hydrolases"/>
    <property type="match status" value="1"/>
</dbReference>
<dbReference type="SUPFAM" id="SSF50156">
    <property type="entry name" value="PDZ domain-like"/>
    <property type="match status" value="3"/>
</dbReference>
<dbReference type="SUPFAM" id="SSF50044">
    <property type="entry name" value="SH3-domain"/>
    <property type="match status" value="1"/>
</dbReference>
<dbReference type="PROSITE" id="PS00856">
    <property type="entry name" value="GUANYLATE_KINASE_1"/>
    <property type="match status" value="1"/>
</dbReference>
<dbReference type="PROSITE" id="PS50052">
    <property type="entry name" value="GUANYLATE_KINASE_2"/>
    <property type="match status" value="1"/>
</dbReference>
<dbReference type="PROSITE" id="PS51022">
    <property type="entry name" value="L27"/>
    <property type="match status" value="1"/>
</dbReference>
<dbReference type="PROSITE" id="PS50106">
    <property type="entry name" value="PDZ"/>
    <property type="match status" value="3"/>
</dbReference>
<dbReference type="PROSITE" id="PS50002">
    <property type="entry name" value="SH3"/>
    <property type="match status" value="1"/>
</dbReference>
<keyword id="KW-0002">3D-structure</keyword>
<keyword id="KW-0025">Alternative splicing</keyword>
<keyword id="KW-0965">Cell junction</keyword>
<keyword id="KW-1003">Cell membrane</keyword>
<keyword id="KW-0963">Cytoplasm</keyword>
<keyword id="KW-0256">Endoplasmic reticulum</keyword>
<keyword id="KW-0945">Host-virus interaction</keyword>
<keyword id="KW-0472">Membrane</keyword>
<keyword id="KW-0597">Phosphoprotein</keyword>
<keyword id="KW-1267">Proteomics identification</keyword>
<keyword id="KW-1185">Reference proteome</keyword>
<keyword id="KW-0677">Repeat</keyword>
<keyword id="KW-0728">SH3 domain</keyword>
<keyword id="KW-0770">Synapse</keyword>
<keyword id="KW-0832">Ubl conjugation</keyword>
<proteinExistence type="evidence at protein level"/>
<feature type="chain" id="PRO_0000094548" description="Disks large homolog 1">
    <location>
        <begin position="1"/>
        <end position="904"/>
    </location>
</feature>
<feature type="domain" description="L27" evidence="7">
    <location>
        <begin position="4"/>
        <end position="64"/>
    </location>
</feature>
<feature type="domain" description="PDZ 1" evidence="5">
    <location>
        <begin position="224"/>
        <end position="310"/>
    </location>
</feature>
<feature type="domain" description="PDZ 2" evidence="5">
    <location>
        <begin position="319"/>
        <end position="405"/>
    </location>
</feature>
<feature type="domain" description="PDZ 3" evidence="5">
    <location>
        <begin position="466"/>
        <end position="546"/>
    </location>
</feature>
<feature type="domain" description="SH3" evidence="6">
    <location>
        <begin position="581"/>
        <end position="651"/>
    </location>
</feature>
<feature type="domain" description="Guanylate kinase-like" evidence="4">
    <location>
        <begin position="714"/>
        <end position="889"/>
    </location>
</feature>
<feature type="region of interest" description="Interaction with SH3 domains">
    <location>
        <begin position="162"/>
        <end position="212"/>
    </location>
</feature>
<feature type="region of interest" description="Required for interaction with MARCHF2" evidence="25">
    <location>
        <begin position="224"/>
        <end position="546"/>
    </location>
</feature>
<feature type="region of interest" description="Disordered" evidence="8">
    <location>
        <begin position="662"/>
        <end position="693"/>
    </location>
</feature>
<feature type="compositionally biased region" description="Polar residues" evidence="8">
    <location>
        <begin position="682"/>
        <end position="693"/>
    </location>
</feature>
<feature type="modified residue" description="Phosphothreonine" evidence="48">
    <location>
        <position position="115"/>
    </location>
</feature>
<feature type="modified residue" description="Phosphoserine" evidence="48">
    <location>
        <position position="122"/>
    </location>
</feature>
<feature type="modified residue" description="Phosphoserine" evidence="52">
    <location>
        <position position="138"/>
    </location>
</feature>
<feature type="modified residue" description="Phosphoserine" evidence="50">
    <location>
        <position position="158"/>
    </location>
</feature>
<feature type="modified residue" description="Phosphoserine" evidence="2">
    <location>
        <position position="232"/>
    </location>
</feature>
<feature type="modified residue" description="Phosphotyrosine" evidence="3">
    <location>
        <position position="399"/>
    </location>
</feature>
<feature type="modified residue" description="Phosphoserine" evidence="50">
    <location>
        <position position="568"/>
    </location>
</feature>
<feature type="modified residue" description="Phosphoserine" evidence="52">
    <location>
        <position position="573"/>
    </location>
</feature>
<feature type="modified residue" description="Phosphoserine" evidence="48 49 50 51">
    <location>
        <position position="575"/>
    </location>
</feature>
<feature type="modified residue" description="Phosphoserine" evidence="51">
    <location>
        <position position="579"/>
    </location>
</feature>
<feature type="modified residue" description="Phosphoserine" evidence="3">
    <location>
        <position position="598"/>
    </location>
</feature>
<feature type="modified residue" description="Phosphoserine" evidence="47">
    <location>
        <position position="619"/>
    </location>
</feature>
<feature type="modified residue" description="Phosphoserine" evidence="48">
    <location>
        <position position="684"/>
    </location>
</feature>
<feature type="modified residue" description="Phosphoserine" evidence="48 50">
    <location>
        <position position="687"/>
    </location>
</feature>
<feature type="modified residue" description="Phosphoserine" evidence="2">
    <location>
        <position position="834"/>
    </location>
</feature>
<feature type="splice variant" id="VSP_045896" description="In isoform 8 and isoform 9." evidence="40">
    <original>MPVRKQDTQRALHLLEEYRSKLSQTEDRQLRSSIERVINIFQSNLFQALIDIQEFYEVTLLDNPKCIDRSKPSEPIQ</original>
    <variation>MNYIFGNNTLLYSRGSRGGNTSSSHGSAGPKQKHWAKKGSSDELQAEPEPSRWQQIVAFFTRRHSFIDCISVATSST</variation>
    <location>
        <begin position="1"/>
        <end position="77"/>
    </location>
</feature>
<feature type="splice variant" id="VSP_045897" description="In isoform 8 and isoform 9." evidence="40">
    <location>
        <begin position="78"/>
        <end position="193"/>
    </location>
</feature>
<feature type="splice variant" id="VSP_012862" description="In isoform 3, isoform 4 and isoform 5." evidence="41 42">
    <location>
        <begin position="162"/>
        <end position="194"/>
    </location>
</feature>
<feature type="splice variant" id="VSP_012863" description="In isoform 5." evidence="44">
    <location>
        <begin position="195"/>
        <end position="212"/>
    </location>
</feature>
<feature type="splice variant" id="VSP_003150" description="In isoform 2 and isoform 4." evidence="41 42">
    <original>EIPDDMGSKGLK</original>
    <variation>QSFNDKRKKNLFSRKFPFYKNKDQSEQETSDADQ</variation>
    <location>
        <begin position="669"/>
        <end position="680"/>
    </location>
</feature>
<feature type="splice variant" id="VSP_012864" description="In isoform 6." evidence="44">
    <location>
        <begin position="681"/>
        <end position="693"/>
    </location>
</feature>
<feature type="splice variant" id="VSP_012865" description="In isoform 7 and isoform 9." evidence="40">
    <original>Y</original>
    <variation>YLILITDEYGCSKG</variation>
    <location>
        <position position="693"/>
    </location>
</feature>
<feature type="splice variant" id="VSP_045898" description="In isoform 9." evidence="40">
    <location>
        <position position="694"/>
    </location>
</feature>
<feature type="sequence variant" id="VAR_054334" description="In dbSNP:rs1802668.">
    <original>K</original>
    <variation>R</variation>
    <location>
        <position position="140"/>
    </location>
</feature>
<feature type="sequence variant" id="VAR_054335" description="In dbSNP:rs1134986." evidence="18 35">
    <original>R</original>
    <variation>Q</variation>
    <location>
        <position position="278"/>
    </location>
</feature>
<feature type="sequence variant" id="VAR_054336" description="In dbSNP:rs34492126.">
    <original>P</original>
    <variation>L</variation>
    <location>
        <position position="899"/>
    </location>
</feature>
<feature type="mutagenesis site" description="Loss of membrane association and DLG2-binding." evidence="16">
    <original>INI</original>
    <variation>ANA</variation>
    <location>
        <begin position="38"/>
        <end position="40"/>
    </location>
</feature>
<feature type="sequence conflict" description="In Ref. 2; BAG57902." evidence="44" ref="2">
    <original>S</original>
    <variation>N</variation>
    <location>
        <position position="237"/>
    </location>
</feature>
<feature type="sequence conflict" description="In Ref. 1; AAA50598/AAA50599." evidence="44" ref="1">
    <original>E</original>
    <variation>G</variation>
    <location>
        <position position="801"/>
    </location>
</feature>
<feature type="helix" evidence="55">
    <location>
        <begin position="5"/>
        <end position="20"/>
    </location>
</feature>
<feature type="strand" evidence="55">
    <location>
        <begin position="24"/>
        <end position="26"/>
    </location>
</feature>
<feature type="helix" evidence="55">
    <location>
        <begin position="30"/>
        <end position="42"/>
    </location>
</feature>
<feature type="helix" evidence="55">
    <location>
        <begin position="44"/>
        <end position="55"/>
    </location>
</feature>
<feature type="turn" evidence="55">
    <location>
        <begin position="60"/>
        <end position="62"/>
    </location>
</feature>
<feature type="helix" evidence="55">
    <location>
        <begin position="64"/>
        <end position="66"/>
    </location>
</feature>
<feature type="strand" evidence="58">
    <location>
        <begin position="220"/>
        <end position="228"/>
    </location>
</feature>
<feature type="strand" evidence="58">
    <location>
        <begin position="235"/>
        <end position="240"/>
    </location>
</feature>
<feature type="strand" evidence="58">
    <location>
        <begin position="253"/>
        <end position="259"/>
    </location>
</feature>
<feature type="helix" evidence="58">
    <location>
        <begin position="263"/>
        <end position="267"/>
    </location>
</feature>
<feature type="strand" evidence="58">
    <location>
        <begin position="275"/>
        <end position="279"/>
    </location>
</feature>
<feature type="helix" evidence="58">
    <location>
        <begin position="289"/>
        <end position="297"/>
    </location>
</feature>
<feature type="strand" evidence="58">
    <location>
        <begin position="301"/>
        <end position="310"/>
    </location>
</feature>
<feature type="strand" evidence="57">
    <location>
        <begin position="317"/>
        <end position="323"/>
    </location>
</feature>
<feature type="strand" evidence="57">
    <location>
        <begin position="328"/>
        <end position="335"/>
    </location>
</feature>
<feature type="strand" evidence="57">
    <location>
        <begin position="348"/>
        <end position="353"/>
    </location>
</feature>
<feature type="strand" evidence="59">
    <location>
        <begin position="355"/>
        <end position="357"/>
    </location>
</feature>
<feature type="helix" evidence="57">
    <location>
        <begin position="358"/>
        <end position="362"/>
    </location>
</feature>
<feature type="strand" evidence="57">
    <location>
        <begin position="370"/>
        <end position="374"/>
    </location>
</feature>
<feature type="strand" evidence="54">
    <location>
        <begin position="377"/>
        <end position="382"/>
    </location>
</feature>
<feature type="helix" evidence="57">
    <location>
        <begin position="384"/>
        <end position="392"/>
    </location>
</feature>
<feature type="strand" evidence="57">
    <location>
        <begin position="396"/>
        <end position="403"/>
    </location>
</feature>
<feature type="strand" evidence="53">
    <location>
        <begin position="465"/>
        <end position="470"/>
    </location>
</feature>
<feature type="strand" evidence="53">
    <location>
        <begin position="472"/>
        <end position="474"/>
    </location>
</feature>
<feature type="strand" evidence="53">
    <location>
        <begin position="477"/>
        <end position="482"/>
    </location>
</feature>
<feature type="strand" evidence="53">
    <location>
        <begin position="484"/>
        <end position="487"/>
    </location>
</feature>
<feature type="strand" evidence="53">
    <location>
        <begin position="489"/>
        <end position="494"/>
    </location>
</feature>
<feature type="helix" evidence="53">
    <location>
        <begin position="499"/>
        <end position="503"/>
    </location>
</feature>
<feature type="strand" evidence="53">
    <location>
        <begin position="510"/>
        <end position="515"/>
    </location>
</feature>
<feature type="helix" evidence="53">
    <location>
        <begin position="525"/>
        <end position="533"/>
    </location>
</feature>
<feature type="strand" evidence="53">
    <location>
        <begin position="537"/>
        <end position="545"/>
    </location>
</feature>
<feature type="helix" evidence="53">
    <location>
        <begin position="547"/>
        <end position="554"/>
    </location>
</feature>
<feature type="strand" evidence="56">
    <location>
        <begin position="717"/>
        <end position="721"/>
    </location>
</feature>
<feature type="helix" evidence="56">
    <location>
        <begin position="724"/>
        <end position="734"/>
    </location>
</feature>
<feature type="turn" evidence="56">
    <location>
        <begin position="736"/>
        <end position="738"/>
    </location>
</feature>
<feature type="turn" evidence="56">
    <location>
        <begin position="756"/>
        <end position="758"/>
    </location>
</feature>
<feature type="helix" evidence="56">
    <location>
        <begin position="766"/>
        <end position="774"/>
    </location>
</feature>
<feature type="strand" evidence="56">
    <location>
        <begin position="778"/>
        <end position="784"/>
    </location>
</feature>
<feature type="strand" evidence="56">
    <location>
        <begin position="787"/>
        <end position="792"/>
    </location>
</feature>
<feature type="helix" evidence="56">
    <location>
        <begin position="793"/>
        <end position="800"/>
    </location>
</feature>
<feature type="turn" evidence="56">
    <location>
        <begin position="801"/>
        <end position="803"/>
    </location>
</feature>
<feature type="strand" evidence="56">
    <location>
        <begin position="805"/>
        <end position="808"/>
    </location>
</feature>
<feature type="helix" evidence="56">
    <location>
        <begin position="813"/>
        <end position="820"/>
    </location>
</feature>
<feature type="strand" evidence="56">
    <location>
        <begin position="826"/>
        <end position="830"/>
    </location>
</feature>
<feature type="helix" evidence="56">
    <location>
        <begin position="855"/>
        <end position="864"/>
    </location>
</feature>
<feature type="helix" evidence="56">
    <location>
        <begin position="865"/>
        <end position="867"/>
    </location>
</feature>
<feature type="strand" evidence="56">
    <location>
        <begin position="869"/>
        <end position="872"/>
    </location>
</feature>
<feature type="helix" evidence="56">
    <location>
        <begin position="877"/>
        <end position="892"/>
    </location>
</feature>
<feature type="helix" evidence="56">
    <location>
        <begin position="900"/>
        <end position="902"/>
    </location>
</feature>
<feature type="modified residue" description="Phosphoserine" evidence="52">
    <location sequence="Q12959-2">
        <position position="709"/>
    </location>
</feature>
<feature type="modified residue" description="Phosphoserine" evidence="52">
    <location sequence="Q12959-4">
        <position position="676"/>
    </location>
</feature>
<feature type="sequence conflict" description="In Ref. 6; AAI44652." evidence="44" ref="6">
    <location sequence="Q12959-4">
        <position position="636"/>
    </location>
</feature>
<protein>
    <recommendedName>
        <fullName evidence="44">Disks large homolog 1</fullName>
    </recommendedName>
    <alternativeName>
        <fullName evidence="39">Synapse-associated protein 97</fullName>
        <shortName evidence="39">SAP-97</shortName>
        <shortName evidence="43">SAP97</shortName>
    </alternativeName>
    <alternativeName>
        <fullName evidence="43">hDlg</fullName>
    </alternativeName>
</protein>
<reference key="1">
    <citation type="journal article" date="1994" name="Proc. Natl. Acad. Sci. U.S.A.">
        <title>Cloning and characterization of hdlg: the human homologue of the Drosophila discs large tumor suppressor binds to protein 4.1.</title>
        <authorList>
            <person name="Lue R.A."/>
            <person name="Marfatia S.M."/>
            <person name="Branton D."/>
            <person name="Chishti A.H."/>
        </authorList>
    </citation>
    <scope>NUCLEOTIDE SEQUENCE [MRNA] (ISOFORMS 1; 2; 3 AND 4)</scope>
    <scope>TISSUE SPECIFICITY</scope>
    <scope>SUBCELLULAR LOCATION</scope>
    <scope>INTERACTION WITH EPB41</scope>
    <scope>VARIANT GLN-278</scope>
</reference>
<reference key="2">
    <citation type="journal article" date="2004" name="Nat. Genet.">
        <title>Complete sequencing and characterization of 21,243 full-length human cDNAs.</title>
        <authorList>
            <person name="Ota T."/>
            <person name="Suzuki Y."/>
            <person name="Nishikawa T."/>
            <person name="Otsuki T."/>
            <person name="Sugiyama T."/>
            <person name="Irie R."/>
            <person name="Wakamatsu A."/>
            <person name="Hayashi K."/>
            <person name="Sato H."/>
            <person name="Nagai K."/>
            <person name="Kimura K."/>
            <person name="Makita H."/>
            <person name="Sekine M."/>
            <person name="Obayashi M."/>
            <person name="Nishi T."/>
            <person name="Shibahara T."/>
            <person name="Tanaka T."/>
            <person name="Ishii S."/>
            <person name="Yamamoto J."/>
            <person name="Saito K."/>
            <person name="Kawai Y."/>
            <person name="Isono Y."/>
            <person name="Nakamura Y."/>
            <person name="Nagahari K."/>
            <person name="Murakami K."/>
            <person name="Yasuda T."/>
            <person name="Iwayanagi T."/>
            <person name="Wagatsuma M."/>
            <person name="Shiratori A."/>
            <person name="Sudo H."/>
            <person name="Hosoiri T."/>
            <person name="Kaku Y."/>
            <person name="Kodaira H."/>
            <person name="Kondo H."/>
            <person name="Sugawara M."/>
            <person name="Takahashi M."/>
            <person name="Kanda K."/>
            <person name="Yokoi T."/>
            <person name="Furuya T."/>
            <person name="Kikkawa E."/>
            <person name="Omura Y."/>
            <person name="Abe K."/>
            <person name="Kamihara K."/>
            <person name="Katsuta N."/>
            <person name="Sato K."/>
            <person name="Tanikawa M."/>
            <person name="Yamazaki M."/>
            <person name="Ninomiya K."/>
            <person name="Ishibashi T."/>
            <person name="Yamashita H."/>
            <person name="Murakawa K."/>
            <person name="Fujimori K."/>
            <person name="Tanai H."/>
            <person name="Kimata M."/>
            <person name="Watanabe M."/>
            <person name="Hiraoka S."/>
            <person name="Chiba Y."/>
            <person name="Ishida S."/>
            <person name="Ono Y."/>
            <person name="Takiguchi S."/>
            <person name="Watanabe S."/>
            <person name="Yosida M."/>
            <person name="Hotuta T."/>
            <person name="Kusano J."/>
            <person name="Kanehori K."/>
            <person name="Takahashi-Fujii A."/>
            <person name="Hara H."/>
            <person name="Tanase T.-O."/>
            <person name="Nomura Y."/>
            <person name="Togiya S."/>
            <person name="Komai F."/>
            <person name="Hara R."/>
            <person name="Takeuchi K."/>
            <person name="Arita M."/>
            <person name="Imose N."/>
            <person name="Musashino K."/>
            <person name="Yuuki H."/>
            <person name="Oshima A."/>
            <person name="Sasaki N."/>
            <person name="Aotsuka S."/>
            <person name="Yoshikawa Y."/>
            <person name="Matsunawa H."/>
            <person name="Ichihara T."/>
            <person name="Shiohata N."/>
            <person name="Sano S."/>
            <person name="Moriya S."/>
            <person name="Momiyama H."/>
            <person name="Satoh N."/>
            <person name="Takami S."/>
            <person name="Terashima Y."/>
            <person name="Suzuki O."/>
            <person name="Nakagawa S."/>
            <person name="Senoh A."/>
            <person name="Mizoguchi H."/>
            <person name="Goto Y."/>
            <person name="Shimizu F."/>
            <person name="Wakebe H."/>
            <person name="Hishigaki H."/>
            <person name="Watanabe T."/>
            <person name="Sugiyama A."/>
            <person name="Takemoto M."/>
            <person name="Kawakami B."/>
            <person name="Yamazaki M."/>
            <person name="Watanabe K."/>
            <person name="Kumagai A."/>
            <person name="Itakura S."/>
            <person name="Fukuzumi Y."/>
            <person name="Fujimori Y."/>
            <person name="Komiyama M."/>
            <person name="Tashiro H."/>
            <person name="Tanigami A."/>
            <person name="Fujiwara T."/>
            <person name="Ono T."/>
            <person name="Yamada K."/>
            <person name="Fujii Y."/>
            <person name="Ozaki K."/>
            <person name="Hirao M."/>
            <person name="Ohmori Y."/>
            <person name="Kawabata A."/>
            <person name="Hikiji T."/>
            <person name="Kobatake N."/>
            <person name="Inagaki H."/>
            <person name="Ikema Y."/>
            <person name="Okamoto S."/>
            <person name="Okitani R."/>
            <person name="Kawakami T."/>
            <person name="Noguchi S."/>
            <person name="Itoh T."/>
            <person name="Shigeta K."/>
            <person name="Senba T."/>
            <person name="Matsumura K."/>
            <person name="Nakajima Y."/>
            <person name="Mizuno T."/>
            <person name="Morinaga M."/>
            <person name="Sasaki M."/>
            <person name="Togashi T."/>
            <person name="Oyama M."/>
            <person name="Hata H."/>
            <person name="Watanabe M."/>
            <person name="Komatsu T."/>
            <person name="Mizushima-Sugano J."/>
            <person name="Satoh T."/>
            <person name="Shirai Y."/>
            <person name="Takahashi Y."/>
            <person name="Nakagawa K."/>
            <person name="Okumura K."/>
            <person name="Nagase T."/>
            <person name="Nomura N."/>
            <person name="Kikuchi H."/>
            <person name="Masuho Y."/>
            <person name="Yamashita R."/>
            <person name="Nakai K."/>
            <person name="Yada T."/>
            <person name="Nakamura Y."/>
            <person name="Ohara O."/>
            <person name="Isogai T."/>
            <person name="Sugano S."/>
        </authorList>
    </citation>
    <scope>NUCLEOTIDE SEQUENCE [LARGE SCALE MRNA] (ISOFORMS 8 AND 9)</scope>
    <scope>VARIANT GLN-278</scope>
    <source>
        <tissue>Brain</tissue>
    </source>
</reference>
<reference key="3">
    <citation type="journal article" date="2007" name="BMC Genomics">
        <title>The full-ORF clone resource of the German cDNA consortium.</title>
        <authorList>
            <person name="Bechtel S."/>
            <person name="Rosenfelder H."/>
            <person name="Duda A."/>
            <person name="Schmidt C.P."/>
            <person name="Ernst U."/>
            <person name="Wellenreuther R."/>
            <person name="Mehrle A."/>
            <person name="Schuster C."/>
            <person name="Bahr A."/>
            <person name="Bloecker H."/>
            <person name="Heubner D."/>
            <person name="Hoerlein A."/>
            <person name="Michel G."/>
            <person name="Wedler H."/>
            <person name="Koehrer K."/>
            <person name="Ottenwaelder B."/>
            <person name="Poustka A."/>
            <person name="Wiemann S."/>
            <person name="Schupp I."/>
        </authorList>
    </citation>
    <scope>NUCLEOTIDE SEQUENCE [LARGE SCALE MRNA] (ISOFORM 1)</scope>
    <source>
        <tissue>Liver</tissue>
    </source>
</reference>
<reference key="4">
    <citation type="journal article" date="2006" name="Nature">
        <title>The DNA sequence, annotation and analysis of human chromosome 3.</title>
        <authorList>
            <person name="Muzny D.M."/>
            <person name="Scherer S.E."/>
            <person name="Kaul R."/>
            <person name="Wang J."/>
            <person name="Yu J."/>
            <person name="Sudbrak R."/>
            <person name="Buhay C.J."/>
            <person name="Chen R."/>
            <person name="Cree A."/>
            <person name="Ding Y."/>
            <person name="Dugan-Rocha S."/>
            <person name="Gill R."/>
            <person name="Gunaratne P."/>
            <person name="Harris R.A."/>
            <person name="Hawes A.C."/>
            <person name="Hernandez J."/>
            <person name="Hodgson A.V."/>
            <person name="Hume J."/>
            <person name="Jackson A."/>
            <person name="Khan Z.M."/>
            <person name="Kovar-Smith C."/>
            <person name="Lewis L.R."/>
            <person name="Lozado R.J."/>
            <person name="Metzker M.L."/>
            <person name="Milosavljevic A."/>
            <person name="Miner G.R."/>
            <person name="Morgan M.B."/>
            <person name="Nazareth L.V."/>
            <person name="Scott G."/>
            <person name="Sodergren E."/>
            <person name="Song X.-Z."/>
            <person name="Steffen D."/>
            <person name="Wei S."/>
            <person name="Wheeler D.A."/>
            <person name="Wright M.W."/>
            <person name="Worley K.C."/>
            <person name="Yuan Y."/>
            <person name="Zhang Z."/>
            <person name="Adams C.Q."/>
            <person name="Ansari-Lari M.A."/>
            <person name="Ayele M."/>
            <person name="Brown M.J."/>
            <person name="Chen G."/>
            <person name="Chen Z."/>
            <person name="Clendenning J."/>
            <person name="Clerc-Blankenburg K.P."/>
            <person name="Chen R."/>
            <person name="Chen Z."/>
            <person name="Davis C."/>
            <person name="Delgado O."/>
            <person name="Dinh H.H."/>
            <person name="Dong W."/>
            <person name="Draper H."/>
            <person name="Ernst S."/>
            <person name="Fu G."/>
            <person name="Gonzalez-Garay M.L."/>
            <person name="Garcia D.K."/>
            <person name="Gillett W."/>
            <person name="Gu J."/>
            <person name="Hao B."/>
            <person name="Haugen E."/>
            <person name="Havlak P."/>
            <person name="He X."/>
            <person name="Hennig S."/>
            <person name="Hu S."/>
            <person name="Huang W."/>
            <person name="Jackson L.R."/>
            <person name="Jacob L.S."/>
            <person name="Kelly S.H."/>
            <person name="Kube M."/>
            <person name="Levy R."/>
            <person name="Li Z."/>
            <person name="Liu B."/>
            <person name="Liu J."/>
            <person name="Liu W."/>
            <person name="Lu J."/>
            <person name="Maheshwari M."/>
            <person name="Nguyen B.-V."/>
            <person name="Okwuonu G.O."/>
            <person name="Palmeiri A."/>
            <person name="Pasternak S."/>
            <person name="Perez L.M."/>
            <person name="Phelps K.A."/>
            <person name="Plopper F.J."/>
            <person name="Qiang B."/>
            <person name="Raymond C."/>
            <person name="Rodriguez R."/>
            <person name="Saenphimmachak C."/>
            <person name="Santibanez J."/>
            <person name="Shen H."/>
            <person name="Shen Y."/>
            <person name="Subramanian S."/>
            <person name="Tabor P.E."/>
            <person name="Verduzco D."/>
            <person name="Waldron L."/>
            <person name="Wang J."/>
            <person name="Wang J."/>
            <person name="Wang Q."/>
            <person name="Williams G.A."/>
            <person name="Wong G.K.-S."/>
            <person name="Yao Z."/>
            <person name="Zhang J."/>
            <person name="Zhang X."/>
            <person name="Zhao G."/>
            <person name="Zhou J."/>
            <person name="Zhou Y."/>
            <person name="Nelson D."/>
            <person name="Lehrach H."/>
            <person name="Reinhardt R."/>
            <person name="Naylor S.L."/>
            <person name="Yang H."/>
            <person name="Olson M."/>
            <person name="Weinstock G."/>
            <person name="Gibbs R.A."/>
        </authorList>
    </citation>
    <scope>NUCLEOTIDE SEQUENCE [LARGE SCALE GENOMIC DNA]</scope>
</reference>
<reference key="5">
    <citation type="submission" date="2005-09" db="EMBL/GenBank/DDBJ databases">
        <authorList>
            <person name="Mural R.J."/>
            <person name="Istrail S."/>
            <person name="Sutton G.G."/>
            <person name="Florea L."/>
            <person name="Halpern A.L."/>
            <person name="Mobarry C.M."/>
            <person name="Lippert R."/>
            <person name="Walenz B."/>
            <person name="Shatkay H."/>
            <person name="Dew I."/>
            <person name="Miller J.R."/>
            <person name="Flanigan M.J."/>
            <person name="Edwards N.J."/>
            <person name="Bolanos R."/>
            <person name="Fasulo D."/>
            <person name="Halldorsson B.V."/>
            <person name="Hannenhalli S."/>
            <person name="Turner R."/>
            <person name="Yooseph S."/>
            <person name="Lu F."/>
            <person name="Nusskern D.R."/>
            <person name="Shue B.C."/>
            <person name="Zheng X.H."/>
            <person name="Zhong F."/>
            <person name="Delcher A.L."/>
            <person name="Huson D.H."/>
            <person name="Kravitz S.A."/>
            <person name="Mouchard L."/>
            <person name="Reinert K."/>
            <person name="Remington K.A."/>
            <person name="Clark A.G."/>
            <person name="Waterman M.S."/>
            <person name="Eichler E.E."/>
            <person name="Adams M.D."/>
            <person name="Hunkapiller M.W."/>
            <person name="Myers E.W."/>
            <person name="Venter J.C."/>
        </authorList>
    </citation>
    <scope>NUCLEOTIDE SEQUENCE [LARGE SCALE GENOMIC DNA]</scope>
</reference>
<reference key="6">
    <citation type="journal article" date="2004" name="Genome Res.">
        <title>The status, quality, and expansion of the NIH full-length cDNA project: the Mammalian Gene Collection (MGC).</title>
        <authorList>
            <consortium name="The MGC Project Team"/>
        </authorList>
    </citation>
    <scope>NUCLEOTIDE SEQUENCE [LARGE SCALE MRNA] (ISOFORMS 2 AND 4)</scope>
    <source>
        <tissue>Brain</tissue>
    </source>
</reference>
<reference key="7">
    <citation type="journal article" date="1995" name="Nature">
        <title>Clustering of Shaker-type K+ channels by interaction with a family of membrane-associated guanylate kinases.</title>
        <authorList>
            <person name="Kim E."/>
            <person name="Niethammer M."/>
            <person name="Rothschild A."/>
            <person name="Jan Y.N."/>
            <person name="Sheng M."/>
        </authorList>
    </citation>
    <scope>INTERACTION WITH KCNA1; KCNA2; KCNA3 AND KCNA4</scope>
</reference>
<reference key="8">
    <citation type="journal article" date="1996" name="J. Cell Biol.">
        <title>Two independent domains of hDlg are sufficient for subcellular targeting: the PDZ1-2 conformational unit and an alternatively spliced domain.</title>
        <authorList>
            <person name="Lue R.A."/>
            <person name="Brandin E."/>
            <person name="Chan E.P."/>
            <person name="Branton D."/>
        </authorList>
    </citation>
    <scope>INTERACTION WITH EPB41</scope>
    <scope>SUBCELLULAR LOCATION</scope>
</reference>
<reference key="9">
    <citation type="journal article" date="1996" name="Science">
        <title>Binding of APC to the human homolog of the Drosophila discs large tumor suppressor protein.</title>
        <authorList>
            <person name="Matsumine A."/>
            <person name="Ogai A."/>
            <person name="Senda T."/>
            <person name="Okumura N."/>
            <person name="Satoh K."/>
            <person name="Baeg G.-H."/>
            <person name="Kawahara T."/>
            <person name="Kobayashi S."/>
            <person name="Okada M."/>
            <person name="Toyoshima K."/>
            <person name="Akiyama T."/>
        </authorList>
    </citation>
    <scope>INTERACTION WITH APC</scope>
</reference>
<reference key="10">
    <citation type="journal article" date="1997" name="Proc. Natl. Acad. Sci. U.S.A.">
        <title>Binding of human virus oncoproteins to hDlg/SAP97, a mammalian homolog of the Drosophila discs large tumor suppressor protein.</title>
        <authorList>
            <person name="Lee S.S."/>
            <person name="Weiss R.S."/>
            <person name="Javier R.T."/>
        </authorList>
    </citation>
    <scope>INTERACTION WITH HPV-18 PROTEIN E6 (MICROBIAL INFECTION)</scope>
</reference>
<reference key="11">
    <citation type="journal article" date="1999" name="Oncogene">
        <title>Tax oncoprotein of HTLV-1 binds to the human homologue of Drosophila discs large tumor suppressor protein, hDLG, and perturbs its function in cell growth control.</title>
        <authorList>
            <person name="Suzuki T."/>
            <person name="Ohsugi Y."/>
            <person name="Uchida-Toita M."/>
            <person name="Akiyama T."/>
            <person name="Yoshida M."/>
        </authorList>
    </citation>
    <scope>INTERACTION WITH HTLV-1 TAX (MICROBIAL INFECTION)</scope>
</reference>
<reference key="12">
    <citation type="journal article" date="2000" name="J. Biol. Chem.">
        <title>GAKIN, a novel kinesin-like protein associates with the human homologue of the Drosophila discs large tumor suppressor in T lymphocytes.</title>
        <authorList>
            <person name="Hanada T."/>
            <person name="Lin L."/>
            <person name="Tibaldi E.V."/>
            <person name="Reinherz E.L."/>
            <person name="Chishti A.H."/>
        </authorList>
    </citation>
    <scope>INTERACTION WITH KIF13B</scope>
    <scope>SUBCELLULAR LOCATION</scope>
</reference>
<reference key="13">
    <citation type="journal article" date="2000" name="Oncogene">
        <title>The APC-hDLG complex negatively regulates cell cycle progression from the G0/G1 to S phase.</title>
        <authorList>
            <person name="Ishidate T."/>
            <person name="Matsumine A."/>
            <person name="Toyoshima K."/>
            <person name="Akiyama T."/>
        </authorList>
    </citation>
    <scope>INTERACTION WITH APC</scope>
    <scope>FUNCTION IN CELL PROLIFERATION</scope>
</reference>
<reference key="14">
    <citation type="journal article" date="2000" name="Proc. Natl. Acad. Sci. U.S.A.">
        <title>Characterization of PDZ-binding kinase, a mitotic kinase.</title>
        <authorList>
            <person name="Gaudet S."/>
            <person name="Branton D."/>
            <person name="Lue R.A."/>
        </authorList>
    </citation>
    <scope>INTERACTION WITH TOPK</scope>
</reference>
<reference key="15">
    <citation type="journal article" date="2001" name="J. Biol. Chem.">
        <title>Pilt, a novel peripheral membrane protein at tight junctions in epithelial cells.</title>
        <authorList>
            <person name="Kawabe H."/>
            <person name="Nakanishi H."/>
            <person name="Asada M."/>
            <person name="Fukuhara A."/>
            <person name="Morimoto K."/>
            <person name="Takeuchi M."/>
            <person name="Takai Y."/>
        </authorList>
    </citation>
    <scope>POSSIBLE INTERACTION WITH TJAP1</scope>
</reference>
<reference key="16">
    <citation type="journal article" date="2002" name="Cardiovasc. Res.">
        <title>Expression, regulation and role of the MAGUK protein SAP-97 in human atrial myocardium.</title>
        <authorList>
            <person name="Godreau D."/>
            <person name="Vranckx R."/>
            <person name="Maguy A."/>
            <person name="Rucker-Martin C."/>
            <person name="Goyenvalle C."/>
            <person name="Abdelshafy S."/>
            <person name="Tessier S."/>
            <person name="Couetil J.P."/>
            <person name="Hatem S.N."/>
        </authorList>
    </citation>
    <scope>FUNCTION</scope>
    <scope>TISSUE SPECIFICITY</scope>
    <scope>SUBCELLULAR LOCATION</scope>
    <scope>INTERACTION WITH KCNF1</scope>
</reference>
<reference key="17">
    <citation type="journal article" date="2002" name="J. Biol. Chem.">
        <title>The distribution and function of alternatively spliced insertions in hDlg.</title>
        <authorList>
            <person name="McLaughlin M."/>
            <person name="Hale R."/>
            <person name="Ellston D."/>
            <person name="Gaudet S."/>
            <person name="Lue R.A."/>
            <person name="Viel A."/>
        </authorList>
    </citation>
    <scope>ALTERNATIVE SPLICING (ISOFORMS 5; 6 AND 7)</scope>
    <scope>SUBCELLULAR LOCATION</scope>
</reference>
<reference key="18">
    <citation type="journal article" date="2003" name="J. Biol. Chem.">
        <title>Protein 4.1-mediated membrane targeting of human discs large in epithelial cells.</title>
        <authorList>
            <person name="Hanada T."/>
            <person name="Takeuchi A."/>
            <person name="Sondarva G."/>
            <person name="Chishti A.H."/>
        </authorList>
    </citation>
    <scope>SUBCELLULAR LOCATION</scope>
    <scope>MUTAGENESIS OF 38-ILE--ILE-40</scope>
</reference>
<reference key="19">
    <citation type="journal article" date="2004" name="J. Biol. Chem.">
        <title>Human homolog of disc-large is required for adherens junction assembly and differentiation of human intestinal epithelial cells.</title>
        <authorList>
            <person name="Laprise P."/>
            <person name="Viel A."/>
            <person name="Rivard N."/>
        </authorList>
    </citation>
    <scope>INTERACTION WITH PIK3R1 AND CDH1</scope>
    <scope>FUNCTION IN ADHERENS JUNCTION ASSEMBLY</scope>
</reference>
<reference key="20">
    <citation type="journal article" date="2004" name="J. Cell Biol.">
        <title>Discs large (Dlg1) complexes in lymphocyte activation.</title>
        <authorList>
            <person name="Xavier R."/>
            <person name="Rabizadeh S."/>
            <person name="Ishiguro K."/>
            <person name="Andre N."/>
            <person name="Ortiz J.B."/>
            <person name="Wachtel H."/>
            <person name="Morris D.G."/>
            <person name="Lopez-Ilasaca M."/>
            <person name="Shaw A.C."/>
            <person name="Swat W."/>
            <person name="Seed B."/>
        </authorList>
    </citation>
    <scope>FUNCTION IN T-CELL ACTIVATION</scope>
</reference>
<reference key="21">
    <citation type="journal article" date="2004" name="Oncogene">
        <title>Direct binding of the human homologue of the Drosophila disc large tumor suppressor gene to seven-pass transmembrane proteins, tumor endothelial marker 5 (TEM5), and a novel TEM5-like protein.</title>
        <authorList>
            <person name="Yamamoto Y."/>
            <person name="Irie K."/>
            <person name="Asada M."/>
            <person name="Mino A."/>
            <person name="Mandai K."/>
            <person name="Takai Y."/>
        </authorList>
    </citation>
    <scope>INTERACTION WITH ADGRA2 AND ADGRA3</scope>
    <scope>DOMAIN</scope>
</reference>
<reference key="22">
    <citation type="journal article" date="2003" name="Bioessays">
        <title>Dlg, Scribble and Lgl in cell polarity, cell proliferation and cancer.</title>
        <authorList>
            <person name="Humbert P."/>
            <person name="Russell S."/>
            <person name="Richardson H."/>
        </authorList>
    </citation>
    <scope>REVIEW</scope>
</reference>
<reference key="23">
    <citation type="journal article" date="2006" name="Cell">
        <title>Global, in vivo, and site-specific phosphorylation dynamics in signaling networks.</title>
        <authorList>
            <person name="Olsen J.V."/>
            <person name="Blagoev B."/>
            <person name="Gnad F."/>
            <person name="Macek B."/>
            <person name="Kumar C."/>
            <person name="Mortensen P."/>
            <person name="Mann M."/>
        </authorList>
    </citation>
    <scope>IDENTIFICATION BY MASS SPECTROMETRY [LARGE SCALE ANALYSIS]</scope>
    <source>
        <tissue>Cervix carcinoma</tissue>
    </source>
</reference>
<reference key="24">
    <citation type="journal article" date="2006" name="FEBS J.">
        <title>MPP3 is recruited to the MPP5 protein scaffold at the retinal outer limiting membrane.</title>
        <authorList>
            <person name="Kantardzhieva A."/>
            <person name="Alexeeva S."/>
            <person name="Versteeg I."/>
            <person name="Wijnholds J."/>
        </authorList>
    </citation>
    <scope>INTERACTION WITH MPP3</scope>
    <source>
        <tissue>Retina</tissue>
    </source>
</reference>
<reference key="25">
    <citation type="journal article" date="2006" name="Neuron">
        <title>SALM synaptic cell adhesion-like molecules regulate the differentiation of excitatory synapses.</title>
        <authorList>
            <person name="Ko J."/>
            <person name="Kim S."/>
            <person name="Chung H.S."/>
            <person name="Kim K."/>
            <person name="Han K."/>
            <person name="Kim H."/>
            <person name="Jun H."/>
            <person name="Kaang B.-K."/>
            <person name="Kim E."/>
        </authorList>
    </citation>
    <scope>INTERACTION WITH LRFN1; LRFN2 AND LRFN4</scope>
</reference>
<reference key="26">
    <citation type="journal article" date="2007" name="J. Biol. Chem.">
        <title>The stardust family protein MPP7 forms a tripartite complex with LIN7 and DLG1 that regulates the stability and localization of DLG1 to cell junctions.</title>
        <authorList>
            <person name="Bohl J."/>
            <person name="Brimer N."/>
            <person name="Lyons C."/>
            <person name="Vande Pol S.B."/>
        </authorList>
    </citation>
    <scope>INTERACTION WITH LIN7A; LIN7C AND MPP7</scope>
</reference>
<reference key="27">
    <citation type="journal article" date="2007" name="Mol. Biol. Cell">
        <title>The MAGUK protein MPP7 binds to the polarity protein hDlg1 and facilitates epithelial tight junction formation.</title>
        <authorList>
            <person name="Stucke V.M."/>
            <person name="Timmerman E."/>
            <person name="Vandekerckhove J."/>
            <person name="Gevaert K."/>
            <person name="Hall A."/>
        </authorList>
    </citation>
    <scope>INTERACTION WITH MPP7</scope>
</reference>
<reference key="28">
    <citation type="journal article" date="2008" name="Cell. Signal.">
        <title>DLG1 is an anchor for the E3 ligase MARCH2 at sites of cell-cell contact.</title>
        <authorList>
            <person name="Cao Z."/>
            <person name="Huett A."/>
            <person name="Kuballa P."/>
            <person name="Giallourakis C."/>
            <person name="Xavier R.J."/>
        </authorList>
    </citation>
    <scope>INTERACTION WITH MARCHF2</scope>
    <scope>UBIQUITINATION</scope>
</reference>
<reference key="29">
    <citation type="journal article" date="2008" name="J. Neurosci.">
        <title>Preso, a novel PSD-95-interacting FERM and PDZ domain protein that regulates dendritic spine morphogenesis.</title>
        <authorList>
            <person name="Lee H.W."/>
            <person name="Choi J."/>
            <person name="Shin H."/>
            <person name="Kim K."/>
            <person name="Yang J."/>
            <person name="Na M."/>
            <person name="Choi S.Y."/>
            <person name="Kang G.B."/>
            <person name="Eom S.H."/>
            <person name="Kim H."/>
            <person name="Kim E."/>
        </authorList>
    </citation>
    <scope>INTERACTION WITH FRMPD4</scope>
</reference>
<reference key="30">
    <citation type="journal article" date="2008" name="J. Proteome Res.">
        <title>Combining protein-based IMAC, peptide-based IMAC, and MudPIT for efficient phosphoproteomic analysis.</title>
        <authorList>
            <person name="Cantin G.T."/>
            <person name="Yi W."/>
            <person name="Lu B."/>
            <person name="Park S.K."/>
            <person name="Xu T."/>
            <person name="Lee J.-D."/>
            <person name="Yates J.R. III"/>
        </authorList>
    </citation>
    <scope>PHOSPHORYLATION [LARGE SCALE ANALYSIS] AT SER-619</scope>
    <scope>IDENTIFICATION BY MASS SPECTROMETRY [LARGE SCALE ANALYSIS]</scope>
    <source>
        <tissue>Cervix carcinoma</tissue>
    </source>
</reference>
<reference key="31">
    <citation type="journal article" date="2008" name="Proc. Natl. Acad. Sci. U.S.A.">
        <title>A quantitative atlas of mitotic phosphorylation.</title>
        <authorList>
            <person name="Dephoure N."/>
            <person name="Zhou C."/>
            <person name="Villen J."/>
            <person name="Beausoleil S.A."/>
            <person name="Bakalarski C.E."/>
            <person name="Elledge S.J."/>
            <person name="Gygi S.P."/>
        </authorList>
    </citation>
    <scope>PHOSPHORYLATION [LARGE SCALE ANALYSIS] AT THR-115; SER-122; SER-575; SER-684 AND SER-687</scope>
    <scope>IDENTIFICATION BY MASS SPECTROMETRY [LARGE SCALE ANALYSIS]</scope>
    <source>
        <tissue>Cervix carcinoma</tissue>
    </source>
</reference>
<reference key="32">
    <citation type="journal article" date="2009" name="Circ. Res.">
        <title>Kv4 potassium channels form a tripartite complex with the anchoring protein SAP97 and CaMKII in cardiac myocytes.</title>
        <authorList>
            <person name="El-Haou S."/>
            <person name="Balse E."/>
            <person name="Neyroud N."/>
            <person name="Dilanian G."/>
            <person name="Gavillet B."/>
            <person name="Abriel H."/>
            <person name="Coulombe A."/>
            <person name="Jeromin A."/>
            <person name="Hatem S.N."/>
        </authorList>
    </citation>
    <scope>FUNCTION</scope>
    <scope>TISSUE SPECIFICITY</scope>
    <scope>INTERACTION WITH KCND2 AND KCND3</scope>
</reference>
<reference key="33">
    <citation type="journal article" date="2009" name="Sci. Signal.">
        <title>Quantitative phosphoproteomic analysis of T cell receptor signaling reveals system-wide modulation of protein-protein interactions.</title>
        <authorList>
            <person name="Mayya V."/>
            <person name="Lundgren D.H."/>
            <person name="Hwang S.-I."/>
            <person name="Rezaul K."/>
            <person name="Wu L."/>
            <person name="Eng J.K."/>
            <person name="Rodionov V."/>
            <person name="Han D.K."/>
        </authorList>
    </citation>
    <scope>PHOSPHORYLATION [LARGE SCALE ANALYSIS] AT SER-575</scope>
    <scope>IDENTIFICATION BY MASS SPECTROMETRY [LARGE SCALE ANALYSIS]</scope>
    <source>
        <tissue>Leukemic T-cell</tissue>
    </source>
</reference>
<reference key="34">
    <citation type="journal article" date="2010" name="J. Cell Sci.">
        <title>p38gamma regulates interaction of nuclear PSF and RNA with the tumour-suppressor hDlg in response to osmotic shock.</title>
        <authorList>
            <person name="Sabio G."/>
            <person name="Cerezo-Guisado M.I."/>
            <person name="Del Reino P."/>
            <person name="Inesta-Vaquera F.A."/>
            <person name="Rousseau S."/>
            <person name="Arthur J.S."/>
            <person name="Campbell D.G."/>
            <person name="Centeno F."/>
            <person name="Cuenda A."/>
        </authorList>
    </citation>
    <scope>PHOSPHORYLATION BY MAPK12</scope>
    <scope>INTERACTION WITH SFPQ</scope>
    <scope>FUNCTION</scope>
</reference>
<reference key="35">
    <citation type="journal article" date="2010" name="Sci. Signal.">
        <title>Quantitative phosphoproteomics reveals widespread full phosphorylation site occupancy during mitosis.</title>
        <authorList>
            <person name="Olsen J.V."/>
            <person name="Vermeulen M."/>
            <person name="Santamaria A."/>
            <person name="Kumar C."/>
            <person name="Miller M.L."/>
            <person name="Jensen L.J."/>
            <person name="Gnad F."/>
            <person name="Cox J."/>
            <person name="Jensen T.S."/>
            <person name="Nigg E.A."/>
            <person name="Brunak S."/>
            <person name="Mann M."/>
        </authorList>
    </citation>
    <scope>PHOSPHORYLATION [LARGE SCALE ANALYSIS] AT SER-158; SER-568; SER-575 AND SER-687</scope>
    <scope>IDENTIFICATION BY MASS SPECTROMETRY [LARGE SCALE ANALYSIS]</scope>
    <source>
        <tissue>Cervix carcinoma</tissue>
    </source>
</reference>
<reference key="36">
    <citation type="journal article" date="2011" name="BMC Syst. Biol.">
        <title>Initial characterization of the human central proteome.</title>
        <authorList>
            <person name="Burkard T.R."/>
            <person name="Planyavsky M."/>
            <person name="Kaupe I."/>
            <person name="Breitwieser F.P."/>
            <person name="Buerckstuemmer T."/>
            <person name="Bennett K.L."/>
            <person name="Superti-Furga G."/>
            <person name="Colinge J."/>
        </authorList>
    </citation>
    <scope>IDENTIFICATION BY MASS SPECTROMETRY [LARGE SCALE ANALYSIS]</scope>
</reference>
<reference key="37">
    <citation type="journal article" date="2011" name="J. Virol.">
        <title>The avian influenza virus NS1 ESEV PDZ binding motif associates with Dlg1 and Scribble to disrupt cellular tight junctions.</title>
        <authorList>
            <person name="Golebiewski L."/>
            <person name="Liu H."/>
            <person name="Javier R.T."/>
            <person name="Rice A.P."/>
        </authorList>
    </citation>
    <scope>INTERACTION WITH LIN7C AND INFLUENZA A NS1 (MICROBIAL INFECTION)</scope>
    <scope>SUBCELLULAR LOCATION</scope>
</reference>
<reference key="38">
    <citation type="journal article" date="2013" name="J. Clin. Invest.">
        <title>Endocytosis of synaptic ADAM10 in neuronal plasticity and Alzheimer's disease.</title>
        <authorList>
            <person name="Marcello E."/>
            <person name="Saraceno C."/>
            <person name="Musardo S."/>
            <person name="Vara H."/>
            <person name="de la Fuente A.G."/>
            <person name="Pelucchi S."/>
            <person name="Di Marino D."/>
            <person name="Borroni B."/>
            <person name="Tramontano A."/>
            <person name="Perez-Otano I."/>
            <person name="Padovani A."/>
            <person name="Giustetto M."/>
            <person name="Gardoni F."/>
            <person name="Di Luca M."/>
        </authorList>
    </citation>
    <scope>FUNCTION</scope>
    <scope>INTERACTION WITH ADAM10</scope>
    <scope>TISSUE SPECIFICITY</scope>
</reference>
<reference key="39">
    <citation type="journal article" date="2013" name="J. Proteome Res.">
        <title>Toward a comprehensive characterization of a human cancer cell phosphoproteome.</title>
        <authorList>
            <person name="Zhou H."/>
            <person name="Di Palma S."/>
            <person name="Preisinger C."/>
            <person name="Peng M."/>
            <person name="Polat A.N."/>
            <person name="Heck A.J."/>
            <person name="Mohammed S."/>
        </authorList>
    </citation>
    <scope>PHOSPHORYLATION [LARGE SCALE ANALYSIS] AT SER-575 AND SER-579</scope>
    <scope>IDENTIFICATION BY MASS SPECTROMETRY [LARGE SCALE ANALYSIS]</scope>
    <source>
        <tissue>Cervix carcinoma</tissue>
        <tissue>Erythroleukemia</tissue>
    </source>
</reference>
<reference key="40">
    <citation type="journal article" date="2014" name="J. Proteomics">
        <title>An enzyme assisted RP-RPLC approach for in-depth analysis of human liver phosphoproteome.</title>
        <authorList>
            <person name="Bian Y."/>
            <person name="Song C."/>
            <person name="Cheng K."/>
            <person name="Dong M."/>
            <person name="Wang F."/>
            <person name="Huang J."/>
            <person name="Sun D."/>
            <person name="Wang L."/>
            <person name="Ye M."/>
            <person name="Zou H."/>
        </authorList>
    </citation>
    <scope>PHOSPHORYLATION [LARGE SCALE ANALYSIS] AT SER-138 AND SER-573</scope>
    <scope>PHOSPHORYLATION [LARGE SCALE ANALYSIS] AT SER-709 (ISOFORM 2)</scope>
    <scope>PHOSPHORYLATION [LARGE SCALE ANALYSIS] AT SER-676 (ISOFORM 4)</scope>
    <scope>IDENTIFICATION BY MASS SPECTROMETRY [LARGE SCALE ANALYSIS]</scope>
    <source>
        <tissue>Liver</tissue>
    </source>
</reference>
<reference key="41">
    <citation type="journal article" date="2014" name="PLoS ONE">
        <title>Trans-homophilic interaction of CADM1 activates PI3K by forming a complex with MAGuK-family proteins MPP3 and Dlg.</title>
        <authorList>
            <person name="Murakami S."/>
            <person name="Sakurai-Yageta M."/>
            <person name="Maruyama T."/>
            <person name="Murakami Y."/>
        </authorList>
    </citation>
    <scope>INTERACTION WITH MPP3</scope>
</reference>
<reference key="42">
    <citation type="journal article" date="2014" name="PLoS ONE">
        <title>Trans-homophilic interaction of CADM1 activates PI3K by forming a complex with MAGuK-family proteins MPP3 and Dlg.</title>
        <authorList>
            <person name="Murakami S."/>
            <person name="Sakurai-Yageta M."/>
            <person name="Maruyama T."/>
            <person name="Murakami Y."/>
        </authorList>
    </citation>
    <scope>ERRATUM OF PUBMED:24503895</scope>
</reference>
<reference key="43">
    <citation type="journal article" date="2015" name="Cell Rep.">
        <title>GPR124 functions as a WNT7-specific coactivator of canonical beta-catenin signaling.</title>
        <authorList>
            <person name="Posokhova E."/>
            <person name="Shukla A."/>
            <person name="Seaman S."/>
            <person name="Volate S."/>
            <person name="Hilton M.B."/>
            <person name="Wu B."/>
            <person name="Morris H."/>
            <person name="Swing D.A."/>
            <person name="Zhou M."/>
            <person name="Zudaire E."/>
            <person name="Rubin J.S."/>
            <person name="St Croix B."/>
        </authorList>
    </citation>
    <scope>INTERACTION WITH ADGRA2</scope>
    <scope>IDENTIFICATION BY MASS SPECTROMETRY</scope>
</reference>
<reference key="44">
    <citation type="journal article" date="2015" name="Proteomics">
        <title>N-terminome analysis of the human mitochondrial proteome.</title>
        <authorList>
            <person name="Vaca Jacome A.S."/>
            <person name="Rabilloud T."/>
            <person name="Schaeffer-Reiss C."/>
            <person name="Rompais M."/>
            <person name="Ayoub D."/>
            <person name="Lane L."/>
            <person name="Bairoch A."/>
            <person name="Van Dorsselaer A."/>
            <person name="Carapito C."/>
        </authorList>
    </citation>
    <scope>IDENTIFICATION BY MASS SPECTROMETRY [LARGE SCALE ANALYSIS]</scope>
</reference>
<reference key="45">
    <citation type="journal article" date="1996" name="Nature">
        <title>Crystal structure of a PDZ domain.</title>
        <authorList>
            <person name="Cabral J.H."/>
            <person name="Petosa C."/>
            <person name="Sutcliffe M.J."/>
            <person name="Raza S."/>
            <person name="Byron O."/>
            <person name="Poy F."/>
            <person name="Marfatia S.M."/>
            <person name="Chishti A.H."/>
            <person name="Liddington R.C."/>
        </authorList>
    </citation>
    <scope>X-RAY CRYSTALLOGRAPHY (2.8 ANGSTROMS) OF 460-555</scope>
    <scope>SUBUNIT</scope>
</reference>
<reference key="46">
    <citation type="journal article" date="2010" name="FASEB J.">
        <title>Structural basis for tandem L27 domain-mediated polymerization.</title>
        <authorList>
            <person name="Yang X."/>
            <person name="Xie X."/>
            <person name="Chen L."/>
            <person name="Zhou H."/>
            <person name="Wang Z."/>
            <person name="Zhao W."/>
            <person name="Tian R."/>
            <person name="Zhang R."/>
            <person name="Tian C."/>
            <person name="Long J."/>
            <person name="Shen Y."/>
        </authorList>
    </citation>
    <scope>X-RAY CRYSTALLOGRAPHY (2.95 ANGSTROMS) OF 2-65 IN COMPLEX WITH MPP7 AND LIN7C</scope>
    <scope>SUBUNIT</scope>
</reference>
<name>DLG1_HUMAN</name>
<sequence length="904" mass="100455">MPVRKQDTQRALHLLEEYRSKLSQTEDRQLRSSIERVINIFQSNLFQALIDIQEFYEVTLLDNPKCIDRSKPSEPIQPVNTWEISSLPSSTVTSETLPSSLSPSVEKYRYQDEDTPPQEHISPQITNEVIGPELVHVSEKNLSEIENVHGFVSHSHISPIKPTEAVLPSPPTVPVIPVLPVPAENTVILPTIPQANPPPVLVNTDSLETPTYVNGTDADYEYEEITLERGNSGLGFSIAGGTDNPHIGDDSSIFITKIITGGAAAQDGRLRVNDCILRVNEVDVRDVTHSKAVEALKEAGSIVRLYVKRRKPVSEKIMEIKLIKGPKGLGFSIAGGVGNQHIPGDNSIYVTKIIEGGAAHKDGKLQIGDKLLAVNNVCLEEVTHEEAVTALKNTSDFVYLKVAKPTSMYMNDGYAPPDITNSSSQPVDNHVSPSSFLGQTPASPARYSPVSKAVLGDDEITREPRKVVLHRGSTGLGFNIVGGEDGEGIFISFILAGGPADLSGELRKGDRIISVNSVDLRAASHEQAAAALKNAGQAVTIVAQYRPEEYSRFEAKIHDLREQMMNSSISSGSGSLRTSQKRSLYVRALFDYDKTKDSGLPSQGLNFKFGDILHVINASDDEWWQARQVTPDGESDEVGVIPSKRRVEKKERARLKTVKFNSKTRDKGEIPDDMGSKGLKHVTSNASDSESSYRGQEEYVLSYEPVNQQEVNYTRPVIILGPMKDRINDDLISEFPDKFGSCVPHTTRPKRDYEVDGRDYHFVTSREQMEKDIQEHKFIEAGQYNNHLYGTSVQSVREVAEKGKHCILDVSGNAIKRLQIAQLYPISIFIKPKSMENIMEMNKRLTEEQARKTFERAMKLEQEFTEHFTAIVQGDTLEDIYNQVKQIIEEQSGSYIWVPAKEKL</sequence>
<organism>
    <name type="scientific">Homo sapiens</name>
    <name type="common">Human</name>
    <dbReference type="NCBI Taxonomy" id="9606"/>
    <lineage>
        <taxon>Eukaryota</taxon>
        <taxon>Metazoa</taxon>
        <taxon>Chordata</taxon>
        <taxon>Craniata</taxon>
        <taxon>Vertebrata</taxon>
        <taxon>Euteleostomi</taxon>
        <taxon>Mammalia</taxon>
        <taxon>Eutheria</taxon>
        <taxon>Euarchontoglires</taxon>
        <taxon>Primates</taxon>
        <taxon>Haplorrhini</taxon>
        <taxon>Catarrhini</taxon>
        <taxon>Hominidae</taxon>
        <taxon>Homo</taxon>
    </lineage>
</organism>
<comment type="function">
    <text evidence="1 3 10 15 17 20 27 28 31">Essential multidomain scaffolding protein required for normal development (By similarity). Recruits channels, receptors and signaling molecules to discrete plasma membrane domains in polarized cells. Promotes epithelial cell layer barrier function via maintaining cell-cell adhesion (By similarity). May also play a role in adherens junction assembly, signal transduction, cell proliferation, synaptogenesis and lymphocyte activation. Regulates the excitability of cardiac myocytes by modulating the functional expression of Kv4 channels. Functional regulator of Kv1.5 channel. During long-term depression in hippocampal neurons, it recruits ADAM10 to the plasma membrane (PubMed:23676497).</text>
</comment>
<comment type="subunit">
    <text evidence="2 3 10 11 12 13 15 17 19 21 22 23 24 25 26 27 28 29 31 32 33 34 35 36 37 44 45">Homotetramer (Probable). Interacts (via guanylate kinase-like domain) with DLGAP1, DLGAP2, DLGAP3, DLGAP4 and MAP1A (By similarity). Interacts (via guanylate kinase-like domain) with KIF13B (PubMed:10859302). May interact with HTR2A (By similarity). Interacts (via PDZ domains) with GRIA1 (By similarity). Interacts (via PDZ domains) with GRIN2A (By similarity). Interacts (via PDZ domains) with KCND2 and KCND3 (PubMed:19213956). Interacts (via PDZ domains) with KCNA1, KCNA2, KCNA3 and KCNA4 (PubMed:7477295). Interacts (via PDZ domains) with ADGRA3 (PubMed:15021905). Interacts with KCNF1 (PubMed:12445884). Interacts with CAMK2 (By similarity). Interacts with cytoskeleton-associated protein EPB41 (PubMed:7937897, PubMed:8922391). Interacts with cytoskeleton-associated protein EZR (By similarity). Found in a complex with KCNA5 and CAV3 (By similarity). Found in a complex with APC and CTNNB1 (PubMed:10656683, PubMed:8638125). Interacts (via PDZ domains) with APC (PubMed:8638125). Interacts with CDH1 through binding to PIK3R1 (PubMed:14699157). Forms multiprotein complexes with CASK, LIN7A, LIN7B, LIN7C, APBA1, and KCNJ12 (By similarity). Interacts with TOPK (PubMed:10779557). Forms a tripartite complex composed of DLG1, MPP7 and LIN7 (LIN7A or LIN7C) (PubMed:17237226, PubMed:17332497, PubMed:20702775). May interact with TJAP1 (PubMed:11602598). Interacts with PTEN (By similarity). Interacts with FRMPD4 (via C-terminus) (PubMed:19118189). Interacts with LRFN1, LRFN2 and LRFN4 (PubMed:16630835). Interacts with SFPQ (PubMed:20605917). Interacts (via PDZ domains) with ADGRA2 (via PDZ-binding motif) (PubMed:15021905, PubMed:25558062). Interacts with ADAM10; this interaction recruits ADAM10 to the cell membrane during long-term depression in hippocampal neurons (PubMed:23676497). Interacts with DGKI (via PDZ-binding motif) (By similarity). Interacts (via PDZ domains) with MARCHF2 (via PDZ domain); the interaction leads to DLG1 ubiqtuitination and degradation (PubMed:17980554). Interacts (via N-terminus) with MPP3; this interaction connects CADM1 with DLG1 and links CADM1 with the regulatory subunit of phosphoinositide-3-kinase (PI3K) by forming a multiprotein complex and participates in cell spreading (PubMed:16519681, PubMed:24503895).</text>
</comment>
<comment type="subunit">
    <text evidence="9">(Microbial infection) Interacts with HTLV-1 protein Tax.</text>
</comment>
<comment type="subunit">
    <text evidence="30">(Microbial infection) Interacts (via PDZ domains 1 and 2) with influenza A virus protein NS1; the interaction results in the translocation of DLG1 from the cell membrane to perinuclear puncta (PubMed:21849460). Acts as a scaffold protein to facilitate the interaction between LIN7C and influenza A virus protein NS1; the interaction facilitates translocation of LIN7C to cytoplasmic puncta (PubMed:21849460).</text>
</comment>
<comment type="subunit">
    <text evidence="38">(Microbial infection) Interacts with human papillomavirus 18/HPV-18 protein E6.</text>
</comment>
<comment type="interaction">
    <interactant intactId="EBI-357481">
        <id>Q12959</id>
    </interactant>
    <interactant intactId="EBI-78188">
        <id>P78536</id>
        <label>ADAM17</label>
    </interactant>
    <organismsDiffer>false</organismsDiffer>
    <experiments>7</experiments>
</comment>
<comment type="interaction">
    <interactant intactId="EBI-357481">
        <id>Q12959</id>
    </interactant>
    <interactant intactId="EBI-10893263">
        <id>Q96PE1</id>
        <label>ADGRA2</label>
    </interactant>
    <organismsDiffer>false</organismsDiffer>
    <experiments>2</experiments>
</comment>
<comment type="interaction">
    <interactant intactId="EBI-357481">
        <id>Q12959</id>
    </interactant>
    <interactant intactId="EBI-20731422">
        <id>Q9NQ90</id>
        <label>ANO2</label>
    </interactant>
    <organismsDiffer>false</organismsDiffer>
    <experiments>2</experiments>
</comment>
<comment type="interaction">
    <interactant intactId="EBI-357481">
        <id>Q12959</id>
    </interactant>
    <interactant intactId="EBI-3843564">
        <id>A1A5B4</id>
        <label>ANO9</label>
    </interactant>
    <organismsDiffer>false</organismsDiffer>
    <experiments>2</experiments>
</comment>
<comment type="interaction">
    <interactant intactId="EBI-357481">
        <id>Q12959</id>
    </interactant>
    <interactant intactId="EBI-727707">
        <id>P25054</id>
        <label>APC</label>
    </interactant>
    <organismsDiffer>false</organismsDiffer>
    <experiments>2</experiments>
</comment>
<comment type="interaction">
    <interactant intactId="EBI-357481">
        <id>Q12959</id>
    </interactant>
    <interactant intactId="EBI-1057448">
        <id>Q5VV41</id>
        <label>ARHGEF16</label>
    </interactant>
    <organismsDiffer>false</organismsDiffer>
    <experiments>3</experiments>
</comment>
<comment type="interaction">
    <interactant intactId="EBI-357481">
        <id>Q12959</id>
    </interactant>
    <interactant intactId="EBI-307461">
        <id>Q9Y297</id>
        <label>BTRC</label>
    </interactant>
    <organismsDiffer>false</organismsDiffer>
    <experiments>2</experiments>
</comment>
<comment type="interaction">
    <interactant intactId="EBI-357481">
        <id>Q12959</id>
    </interactant>
    <interactant intactId="EBI-20731541">
        <id>Q86XJ0</id>
        <label>CALHM3</label>
    </interactant>
    <organismsDiffer>false</organismsDiffer>
    <experiments>2</experiments>
</comment>
<comment type="interaction">
    <interactant intactId="EBI-357481">
        <id>Q12959</id>
    </interactant>
    <interactant intactId="EBI-15643544">
        <id>P15813</id>
        <label>CD1D</label>
    </interactant>
    <organismsDiffer>false</organismsDiffer>
    <experiments>2</experiments>
</comment>
<comment type="interaction">
    <interactant intactId="EBI-357481">
        <id>Q12959</id>
    </interactant>
    <interactant intactId="EBI-7266482">
        <id>Q9UQB3</id>
        <label>CTNND2</label>
    </interactant>
    <organismsDiffer>false</organismsDiffer>
    <experiments>2</experiments>
</comment>
<comment type="interaction">
    <interactant intactId="EBI-357481">
        <id>Q12959</id>
    </interactant>
    <interactant intactId="EBI-3843579">
        <id>Q9NS75</id>
        <label>CYSLTR2</label>
    </interactant>
    <organismsDiffer>false</organismsDiffer>
    <experiments>7</experiments>
</comment>
<comment type="interaction">
    <interactant intactId="EBI-357481">
        <id>Q12959</id>
    </interactant>
    <interactant intactId="EBI-852291">
        <id>O60447</id>
        <label>EVI5</label>
    </interactant>
    <organismsDiffer>false</organismsDiffer>
    <experiments>2</experiments>
</comment>
<comment type="interaction">
    <interactant intactId="EBI-357481">
        <id>Q12959</id>
    </interactant>
    <interactant intactId="EBI-11793223">
        <id>P0C2L3</id>
        <label>FAM163B</label>
    </interactant>
    <organismsDiffer>false</organismsDiffer>
    <experiments>3</experiments>
</comment>
<comment type="interaction">
    <interactant intactId="EBI-357481">
        <id>Q12959</id>
    </interactant>
    <interactant intactId="EBI-311279">
        <id>Q14CM0</id>
        <label>FRMPD4</label>
    </interactant>
    <organismsDiffer>false</organismsDiffer>
    <experiments>4</experiments>
</comment>
<comment type="interaction">
    <interactant intactId="EBI-357481">
        <id>Q12959</id>
    </interactant>
    <interactant intactId="EBI-2256942">
        <id>Q13224</id>
        <label>GRIN2B</label>
    </interactant>
    <organismsDiffer>false</organismsDiffer>
    <experiments>4</experiments>
</comment>
<comment type="interaction">
    <interactant intactId="EBI-357481">
        <id>Q12959</id>
    </interactant>
    <interactant intactId="EBI-8285963">
        <id>Q14957</id>
        <label>GRIN2C</label>
    </interactant>
    <organismsDiffer>false</organismsDiffer>
    <experiments>2</experiments>
</comment>
<comment type="interaction">
    <interactant intactId="EBI-357481">
        <id>Q12959</id>
    </interactant>
    <interactant intactId="EBI-6911715">
        <id>P33402</id>
        <label>GUCY1A2</label>
    </interactant>
    <organismsDiffer>false</organismsDiffer>
    <experiments>2</experiments>
</comment>
<comment type="interaction">
    <interactant intactId="EBI-357481">
        <id>Q12959</id>
    </interactant>
    <interactant intactId="EBI-2832021">
        <id>Q9P2D3</id>
        <label>HEATR5B</label>
    </interactant>
    <organismsDiffer>false</organismsDiffer>
    <experiments>2</experiments>
</comment>
<comment type="interaction">
    <interactant intactId="EBI-357481">
        <id>Q12959</id>
    </interactant>
    <interactant intactId="EBI-631235">
        <id>P22459</id>
        <label>KCNA4</label>
    </interactant>
    <organismsDiffer>false</organismsDiffer>
    <experiments>2</experiments>
</comment>
<comment type="interaction">
    <interactant intactId="EBI-357481">
        <id>Q12959</id>
    </interactant>
    <interactant intactId="EBI-465669">
        <id>O60333-3</id>
        <label>KIF1B</label>
    </interactant>
    <organismsDiffer>false</organismsDiffer>
    <experiments>4</experiments>
</comment>
<comment type="interaction">
    <interactant intactId="EBI-357481">
        <id>Q12959</id>
    </interactant>
    <interactant intactId="EBI-1056930">
        <id>P36507</id>
        <label>MAP2K2</label>
    </interactant>
    <organismsDiffer>false</organismsDiffer>
    <experiments>10</experiments>
</comment>
<comment type="interaction">
    <interactant intactId="EBI-357481">
        <id>Q12959</id>
    </interactant>
    <interactant intactId="EBI-602406">
        <id>P53778</id>
        <label>MAPK12</label>
    </interactant>
    <organismsDiffer>false</organismsDiffer>
    <experiments>2</experiments>
</comment>
<comment type="interaction">
    <interactant intactId="EBI-357481">
        <id>Q12959</id>
    </interactant>
    <interactant intactId="EBI-2511306">
        <id>Q7Z628</id>
        <label>NET1</label>
    </interactant>
    <organismsDiffer>false</organismsDiffer>
    <experiments>5</experiments>
</comment>
<comment type="interaction">
    <interactant intactId="EBI-357481">
        <id>Q12959</id>
    </interactant>
    <interactant intactId="EBI-726447">
        <id>Q99569</id>
        <label>PKP4</label>
    </interactant>
    <organismsDiffer>false</organismsDiffer>
    <experiments>3</experiments>
</comment>
<comment type="interaction">
    <interactant intactId="EBI-357481">
        <id>Q12959</id>
    </interactant>
    <interactant intactId="EBI-1387467">
        <id>P85299</id>
        <label>PRR5</label>
    </interactant>
    <organismsDiffer>false</organismsDiffer>
    <experiments>2</experiments>
</comment>
<comment type="interaction">
    <interactant intactId="EBI-357481">
        <id>Q12959</id>
    </interactant>
    <interactant intactId="EBI-749285">
        <id>Q15311</id>
        <label>RALBP1</label>
    </interactant>
    <organismsDiffer>false</organismsDiffer>
    <experiments>5</experiments>
</comment>
<comment type="interaction">
    <interactant intactId="EBI-357481">
        <id>Q12959</id>
    </interactant>
    <interactant intactId="EBI-7600166">
        <id>O15427</id>
        <label>SLC16A3</label>
    </interactant>
    <organismsDiffer>false</organismsDiffer>
    <experiments>2</experiments>
</comment>
<comment type="interaction">
    <interactant intactId="EBI-357481">
        <id>Q12959</id>
    </interactant>
    <interactant intactId="EBI-11023211">
        <id>Q9C0D5</id>
        <label>TANC1</label>
    </interactant>
    <organismsDiffer>false</organismsDiffer>
    <experiments>3</experiments>
</comment>
<comment type="interaction">
    <interactant intactId="EBI-357481">
        <id>Q12959</id>
    </interactant>
    <interactant intactId="EBI-1054279">
        <id>Q9ULK5</id>
        <label>VANGL2</label>
    </interactant>
    <organismsDiffer>false</organismsDiffer>
    <experiments>2</experiments>
</comment>
<comment type="interaction">
    <interactant intactId="EBI-357481">
        <id>Q12959</id>
    </interactant>
    <interactant intactId="EBI-7461590">
        <id>O57125</id>
        <label>E6</label>
    </interactant>
    <organismsDiffer>true</organismsDiffer>
    <experiments>2</experiments>
</comment>
<comment type="interaction">
    <interactant intactId="EBI-357481">
        <id>Q12959</id>
    </interactant>
    <interactant intactId="EBI-1177242">
        <id>P03126</id>
        <label>E6</label>
    </interactant>
    <organismsDiffer>true</organismsDiffer>
    <experiments>3</experiments>
</comment>
<comment type="interaction">
    <interactant intactId="EBI-357481">
        <id>Q12959</id>
    </interactant>
    <interactant intactId="EBI-11737184">
        <id>P06427</id>
        <label>E6</label>
    </interactant>
    <organismsDiffer>true</organismsDiffer>
    <experiments>3</experiments>
</comment>
<comment type="interaction">
    <interactant intactId="EBI-357481">
        <id>Q12959</id>
    </interactant>
    <interactant intactId="EBI-1186926">
        <id>P06463</id>
        <label>E6</label>
    </interactant>
    <organismsDiffer>true</organismsDiffer>
    <experiments>4</experiments>
</comment>
<comment type="interaction">
    <interactant intactId="EBI-357481">
        <id>Q12959</id>
    </interactant>
    <interactant intactId="EBI-8516807">
        <id>P17386</id>
        <label>E6</label>
    </interactant>
    <organismsDiffer>true</organismsDiffer>
    <experiments>2</experiments>
</comment>
<comment type="interaction">
    <interactant intactId="EBI-357481">
        <id>Q12959</id>
    </interactant>
    <interactant intactId="EBI-11793794">
        <id>P21735</id>
        <label>E6</label>
    </interactant>
    <organismsDiffer>true</organismsDiffer>
    <experiments>2</experiments>
</comment>
<comment type="interaction">
    <interactant intactId="EBI-357481">
        <id>Q12959</id>
    </interactant>
    <interactant intactId="EBI-11793707">
        <id>P24835</id>
        <label>E6</label>
    </interactant>
    <organismsDiffer>true</organismsDiffer>
    <experiments>3</experiments>
</comment>
<comment type="interaction">
    <interactant intactId="EBI-357481">
        <id>Q12959</id>
    </interactant>
    <interactant intactId="EBI-11793748">
        <id>P27228</id>
        <label>E6</label>
    </interactant>
    <organismsDiffer>true</organismsDiffer>
    <experiments>2</experiments>
</comment>
<comment type="interaction">
    <interactant intactId="EBI-357481">
        <id>Q12959</id>
    </interactant>
    <interactant intactId="EBI-7363822">
        <id>P36799</id>
        <label>E6</label>
    </interactant>
    <organismsDiffer>true</organismsDiffer>
    <experiments>2</experiments>
</comment>
<comment type="interaction">
    <interactant intactId="EBI-357481">
        <id>Q12959</id>
    </interactant>
    <interactant intactId="EBI-11793696">
        <id>P50804</id>
        <label>E6</label>
    </interactant>
    <organismsDiffer>true</organismsDiffer>
    <experiments>3</experiments>
</comment>
<comment type="interaction">
    <interactant intactId="EBI-357481">
        <id>Q12959</id>
    </interactant>
    <interactant intactId="EBI-11793910">
        <id>P54667</id>
        <label>E6</label>
    </interactant>
    <organismsDiffer>true</organismsDiffer>
    <experiments>2</experiments>
</comment>
<comment type="interaction">
    <interactant intactId="EBI-357481">
        <id>Q12959</id>
    </interactant>
    <interactant intactId="EBI-7461477">
        <id>Q9ICL1</id>
        <label>se6</label>
    </interactant>
    <organismsDiffer>true</organismsDiffer>
    <experiments>3</experiments>
</comment>
<comment type="interaction">
    <interactant intactId="EBI-357481">
        <id>Q12959</id>
    </interactant>
    <interactant intactId="EBI-11793940">
        <id>P09708</id>
        <label>US32</label>
    </interactant>
    <organismsDiffer>true</organismsDiffer>
    <experiments>2</experiments>
</comment>
<comment type="interaction">
    <interactant intactId="EBI-357500">
        <id>Q12959-2</id>
    </interactant>
    <interactant intactId="EBI-10893263">
        <id>Q96PE1</id>
        <label>ADGRA2</label>
    </interactant>
    <organismsDiffer>false</organismsDiffer>
    <experiments>2</experiments>
</comment>
<comment type="interaction">
    <interactant intactId="EBI-357500">
        <id>Q12959-2</id>
    </interactant>
    <interactant intactId="EBI-10949249">
        <id>Q8IWK6-3</id>
        <label>ADGRA3</label>
    </interactant>
    <organismsDiffer>false</organismsDiffer>
    <experiments>2</experiments>
</comment>
<comment type="interaction">
    <interactant intactId="EBI-357500">
        <id>Q12959-2</id>
    </interactant>
    <interactant intactId="EBI-766408">
        <id>Q9NQT8</id>
        <label>KIF13B</label>
    </interactant>
    <organismsDiffer>false</organismsDiffer>
    <experiments>3</experiments>
</comment>
<comment type="interaction">
    <interactant intactId="EBI-357500">
        <id>Q12959-2</id>
    </interactant>
    <interactant intactId="EBI-375655">
        <id>P31016</id>
        <label>Dlg4</label>
    </interactant>
    <organismsDiffer>true</organismsDiffer>
    <experiments>9</experiments>
</comment>
<comment type="subcellular location">
    <subcellularLocation>
        <location evidence="12 14 30 37">Cell membrane</location>
        <topology evidence="37">Peripheral membrane protein</topology>
    </subcellularLocation>
    <subcellularLocation>
        <location evidence="16">Basolateral cell membrane</location>
    </subcellularLocation>
    <subcellularLocation>
        <location evidence="2">Endoplasmic reticulum membrane</location>
    </subcellularLocation>
    <subcellularLocation>
        <location evidence="2">Postsynaptic density</location>
    </subcellularLocation>
    <subcellularLocation>
        <location evidence="2">Synapse</location>
    </subcellularLocation>
    <subcellularLocation>
        <location evidence="15">Cell membrane</location>
        <location evidence="15">Sarcolemma</location>
    </subcellularLocation>
    <subcellularLocation>
        <location evidence="15">Apical cell membrane</location>
    </subcellularLocation>
    <subcellularLocation>
        <location evidence="12 14 35">Cell junction</location>
    </subcellularLocation>
    <subcellularLocation>
        <location evidence="12">Cytoplasm</location>
    </subcellularLocation>
    <text evidence="2 12 16 37 38">Colocalizes with EPB41 at regions of intercellular contacts. Basolateral in epithelial cells (PubMed:12807908). May also associate with endoplasmic reticulum membranes. Mainly found in neurons soma, moderately found at postsynaptic densities (By similarity).</text>
</comment>
<comment type="alternative products">
    <event type="alternative splicing"/>
    <isoform>
        <id>Q12959-1</id>
        <name>1</name>
        <sequence type="displayed"/>
    </isoform>
    <isoform>
        <id>Q12959-2</id>
        <name>2</name>
        <sequence type="described" ref="VSP_003150"/>
    </isoform>
    <isoform>
        <id>Q12959-3</id>
        <name>3</name>
        <sequence type="described" ref="VSP_012862"/>
    </isoform>
    <isoform>
        <id>Q12959-4</id>
        <name>4</name>
        <sequence type="described" ref="VSP_012862 VSP_003150"/>
    </isoform>
    <isoform>
        <id>Q12959-5</id>
        <name>5</name>
        <sequence type="described" ref="VSP_012862 VSP_012863"/>
    </isoform>
    <isoform>
        <id>Q12959-6</id>
        <name>6</name>
        <sequence type="described" ref="VSP_012864"/>
    </isoform>
    <isoform>
        <id>Q12959-7</id>
        <name>7</name>
        <sequence type="described" ref="VSP_012865"/>
    </isoform>
    <isoform>
        <id>Q12959-8</id>
        <name>8</name>
        <sequence type="described" ref="VSP_045896 VSP_045897"/>
    </isoform>
    <isoform>
        <id>Q12959-9</id>
        <name>9</name>
        <sequence type="described" ref="VSP_045896 VSP_045897 VSP_012865 VSP_045898"/>
    </isoform>
</comment>
<comment type="tissue specificity">
    <text evidence="15 27 31 35">Abundantly expressed in atrial myocardium (at protein level). Expressed in lung fibroblasts, cervical epithelial and B-cells (at protein level). Expressed in the brain (at protein level) (PubMed:23676497). Widely expressed, with isoforms displaying different expression profiles.</text>
</comment>
<comment type="domain">
    <text>The alternatively spliced domain I3 corresponding to amino acids (636-669) of isoform 4 is an EPB41 binding site mediating association to membranes in polarized and non-polarized cells.</text>
</comment>
<comment type="domain">
    <text evidence="19">The PDZ domains may also mediate association to membranes by binding to EPB41 and ADGRA2 together with the L27 domain that binds CASK and DLG2.</text>
</comment>
<comment type="domain">
    <text evidence="29">The L27 domain may regulate DLG1 self-association. The N-terminal alternatively spliced region is capable of binding several SH3 domains and also moderates the level of protein oligomerization.</text>
</comment>
<comment type="PTM">
    <text evidence="2 28">Phosphorylated by MAPK12 (PubMed:20605917). Phosphorylation of Ser-232 regulates association with GRIN2A (By similarity).</text>
</comment>
<comment type="PTM">
    <text evidence="25">Ubiquitinated; by MARCHF2 which results in its degradation.</text>
</comment>
<comment type="similarity">
    <text evidence="44">Belongs to the MAGUK family.</text>
</comment>
<comment type="online information" name="Atlas of Genetics and Cytogenetics in Oncology and Haematology">
    <link uri="https://atlasgeneticsoncology.org/gene/40333/DLG1"/>
</comment>
<gene>
    <name evidence="46" type="primary">DLG1</name>
</gene>
<accession>Q12959</accession>
<accession>A5YKK7</accession>
<accession>B4DGU1</accession>
<accession>B4DGZ8</accession>
<accession>B7ZMM0</accession>
<accession>B9EIQ5</accession>
<accession>D3DXB8</accession>
<accession>D3DXB9</accession>
<accession>E7EWL7</accession>
<accession>E9PG21</accession>
<accession>Q12958</accession>